<protein>
    <recommendedName>
        <fullName evidence="69">Collagen alpha-1(II) chain</fullName>
    </recommendedName>
    <alternativeName>
        <fullName evidence="69">Alpha-1 type II collagen</fullName>
    </alternativeName>
    <component>
        <recommendedName>
            <fullName evidence="69">Collagen alpha-1(II) chain</fullName>
        </recommendedName>
    </component>
    <component>
        <recommendedName>
            <fullName evidence="67">Chondrocalcin</fullName>
        </recommendedName>
    </component>
</protein>
<proteinExistence type="evidence at protein level"/>
<feature type="signal peptide" evidence="3">
    <location>
        <begin position="1"/>
        <end position="25"/>
    </location>
</feature>
<feature type="propeptide" id="PRO_0000005729" description="N-terminal propeptide">
    <location>
        <begin position="26"/>
        <end position="181"/>
    </location>
</feature>
<feature type="chain" id="PRO_0000005730" description="Collagen alpha-1(II) chain">
    <location>
        <begin position="182"/>
        <end position="1241"/>
    </location>
</feature>
<feature type="chain" id="PRO_0000005731" description="Chondrocalcin">
    <location>
        <begin position="1242"/>
        <end position="1487"/>
    </location>
</feature>
<feature type="domain" description="VWFC" evidence="4">
    <location>
        <begin position="32"/>
        <end position="90"/>
    </location>
</feature>
<feature type="domain" description="Fibrillar collagen NC1" evidence="5">
    <location>
        <begin position="1253"/>
        <end position="1487"/>
    </location>
</feature>
<feature type="region of interest" description="Disordered" evidence="6">
    <location>
        <begin position="97"/>
        <end position="1237"/>
    </location>
</feature>
<feature type="region of interest" description="Triple-helical region">
    <location>
        <begin position="201"/>
        <end position="1214"/>
    </location>
</feature>
<feature type="region of interest" description="Nonhelical region (C-terminal)">
    <location>
        <begin position="1215"/>
        <end position="1241"/>
    </location>
</feature>
<feature type="compositionally biased region" description="Basic and acidic residues" evidence="6">
    <location>
        <begin position="105"/>
        <end position="116"/>
    </location>
</feature>
<feature type="compositionally biased region" description="Basic and acidic residues" evidence="6">
    <location>
        <begin position="133"/>
        <end position="154"/>
    </location>
</feature>
<feature type="compositionally biased region" description="Pro residues" evidence="6">
    <location>
        <begin position="158"/>
        <end position="173"/>
    </location>
</feature>
<feature type="compositionally biased region" description="Pro residues" evidence="6">
    <location>
        <begin position="208"/>
        <end position="217"/>
    </location>
</feature>
<feature type="compositionally biased region" description="Low complexity" evidence="6">
    <location>
        <begin position="218"/>
        <end position="239"/>
    </location>
</feature>
<feature type="compositionally biased region" description="Pro residues" evidence="6">
    <location>
        <begin position="241"/>
        <end position="250"/>
    </location>
</feature>
<feature type="compositionally biased region" description="Basic and acidic residues" evidence="6">
    <location>
        <begin position="251"/>
        <end position="265"/>
    </location>
</feature>
<feature type="compositionally biased region" description="Low complexity" evidence="6">
    <location>
        <begin position="310"/>
        <end position="320"/>
    </location>
</feature>
<feature type="compositionally biased region" description="Low complexity" evidence="6">
    <location>
        <begin position="335"/>
        <end position="350"/>
    </location>
</feature>
<feature type="compositionally biased region" description="Gly residues" evidence="6">
    <location>
        <begin position="360"/>
        <end position="369"/>
    </location>
</feature>
<feature type="compositionally biased region" description="Low complexity" evidence="6">
    <location>
        <begin position="370"/>
        <end position="382"/>
    </location>
</feature>
<feature type="compositionally biased region" description="Low complexity" evidence="6">
    <location>
        <begin position="391"/>
        <end position="431"/>
    </location>
</feature>
<feature type="compositionally biased region" description="Pro residues" evidence="6">
    <location>
        <begin position="433"/>
        <end position="442"/>
    </location>
</feature>
<feature type="compositionally biased region" description="Low complexity" evidence="6">
    <location>
        <begin position="622"/>
        <end position="631"/>
    </location>
</feature>
<feature type="compositionally biased region" description="Low complexity" evidence="6">
    <location>
        <begin position="656"/>
        <end position="667"/>
    </location>
</feature>
<feature type="compositionally biased region" description="Basic and acidic residues" evidence="6">
    <location>
        <begin position="764"/>
        <end position="775"/>
    </location>
</feature>
<feature type="compositionally biased region" description="Low complexity" evidence="6">
    <location>
        <begin position="833"/>
        <end position="848"/>
    </location>
</feature>
<feature type="compositionally biased region" description="Low complexity" evidence="6">
    <location>
        <begin position="877"/>
        <end position="913"/>
    </location>
</feature>
<feature type="compositionally biased region" description="Pro residues" evidence="6">
    <location>
        <begin position="1069"/>
        <end position="1079"/>
    </location>
</feature>
<feature type="compositionally biased region" description="Basic and acidic residues" evidence="6">
    <location>
        <begin position="1115"/>
        <end position="1129"/>
    </location>
</feature>
<feature type="compositionally biased region" description="Low complexity" evidence="6">
    <location>
        <begin position="1148"/>
        <end position="1157"/>
    </location>
</feature>
<feature type="compositionally biased region" description="Pro residues" evidence="6">
    <location>
        <begin position="1199"/>
        <end position="1216"/>
    </location>
</feature>
<feature type="binding site" evidence="1">
    <location>
        <position position="1301"/>
    </location>
    <ligand>
        <name>Ca(2+)</name>
        <dbReference type="ChEBI" id="CHEBI:29108"/>
    </ligand>
</feature>
<feature type="binding site" evidence="1">
    <location>
        <position position="1303"/>
    </location>
    <ligand>
        <name>Ca(2+)</name>
        <dbReference type="ChEBI" id="CHEBI:29108"/>
    </ligand>
</feature>
<feature type="binding site" evidence="1">
    <location>
        <position position="1304"/>
    </location>
    <ligand>
        <name>Ca(2+)</name>
        <dbReference type="ChEBI" id="CHEBI:29108"/>
    </ligand>
</feature>
<feature type="binding site" evidence="1">
    <location>
        <position position="1306"/>
    </location>
    <ligand>
        <name>Ca(2+)</name>
        <dbReference type="ChEBI" id="CHEBI:29108"/>
    </ligand>
</feature>
<feature type="binding site" evidence="1">
    <location>
        <position position="1309"/>
    </location>
    <ligand>
        <name>Ca(2+)</name>
        <dbReference type="ChEBI" id="CHEBI:29108"/>
    </ligand>
</feature>
<feature type="site" description="Cleavage; by procollagen N-endopeptidase" evidence="1">
    <location>
        <begin position="181"/>
        <end position="182"/>
    </location>
</feature>
<feature type="site" description="Cleavage; by procollagen C-endopeptidase" evidence="1">
    <location>
        <begin position="1241"/>
        <end position="1242"/>
    </location>
</feature>
<feature type="modified residue" description="5-hydroxylysine" evidence="1">
    <location>
        <position position="190"/>
    </location>
</feature>
<feature type="modified residue" description="5-hydroxylysine" evidence="1">
    <location>
        <position position="287"/>
    </location>
</feature>
<feature type="modified residue" description="5-hydroxylysine" evidence="1">
    <location>
        <position position="299"/>
    </location>
</feature>
<feature type="modified residue" description="5-hydroxylysine" evidence="1">
    <location>
        <position position="308"/>
    </location>
</feature>
<feature type="modified residue" description="5-hydroxylysine" evidence="1">
    <location>
        <position position="374"/>
    </location>
</feature>
<feature type="modified residue" description="5-hydroxylysine" evidence="1">
    <location>
        <position position="608"/>
    </location>
</feature>
<feature type="modified residue" description="5-hydroxylysine" evidence="1">
    <location>
        <position position="620"/>
    </location>
</feature>
<feature type="modified residue" description="4-hydroxyproline" evidence="2">
    <location>
        <position position="659"/>
    </location>
</feature>
<feature type="modified residue" description="4-hydroxyproline" evidence="2">
    <location>
        <position position="668"/>
    </location>
</feature>
<feature type="modified residue" description="3-hydroxyproline" evidence="2">
    <location>
        <position position="670"/>
    </location>
</feature>
<feature type="modified residue" description="4-hydroxyproline" evidence="2">
    <location>
        <position position="671"/>
    </location>
</feature>
<feature type="modified residue" description="4-hydroxyproline" evidence="2">
    <location>
        <position position="674"/>
    </location>
</feature>
<feature type="modified residue" description="3-hydroxyproline" evidence="2">
    <location>
        <position position="907"/>
    </location>
</feature>
<feature type="modified residue" description="4-hydroxyproline" evidence="2">
    <location>
        <position position="908"/>
    </location>
</feature>
<feature type="modified residue" description="4-hydroxyproline" evidence="2">
    <location>
        <position position="914"/>
    </location>
</feature>
<feature type="modified residue" description="4-hydroxyproline" evidence="2">
    <location>
        <position position="920"/>
    </location>
</feature>
<feature type="modified residue" description="5-hydroxylysine" evidence="1">
    <location>
        <position position="1130"/>
    </location>
</feature>
<feature type="modified residue" description="3-hydroxyproline" evidence="1">
    <location>
        <position position="1144"/>
    </location>
</feature>
<feature type="modified residue" description="4-hydroxyproline" evidence="2">
    <location>
        <position position="1181"/>
    </location>
</feature>
<feature type="modified residue" description="3-hydroxyproline" evidence="2">
    <location>
        <position position="1186"/>
    </location>
</feature>
<feature type="modified residue" description="4-hydroxyproline" evidence="2">
    <location>
        <position position="1187"/>
    </location>
</feature>
<feature type="modified residue" description="3-hydroxyproline" evidence="2">
    <location>
        <position position="1201"/>
    </location>
</feature>
<feature type="modified residue" description="4-hydroxyproline" evidence="2">
    <location>
        <position position="1202"/>
    </location>
</feature>
<feature type="modified residue" description="4-hydroxyproline" evidence="2">
    <location>
        <position position="1205"/>
    </location>
</feature>
<feature type="modified residue" description="3-hydroxyproline" evidence="2">
    <location>
        <position position="1207"/>
    </location>
</feature>
<feature type="modified residue" description="4-hydroxyproline" evidence="2">
    <location>
        <position position="1208"/>
    </location>
</feature>
<feature type="modified residue" description="4-hydroxyproline" evidence="2">
    <location>
        <position position="1211"/>
    </location>
</feature>
<feature type="modified residue" description="3-hydroxyproline" evidence="2">
    <location>
        <position position="1213"/>
    </location>
</feature>
<feature type="modified residue" description="4-hydroxyproline" evidence="2">
    <location>
        <position position="1214"/>
    </location>
</feature>
<feature type="glycosylation site" description="O-linked (Gal...) hydroxylysine" evidence="1">
    <location>
        <position position="190"/>
    </location>
</feature>
<feature type="glycosylation site" description="O-linked (Gal...) hydroxylysine" evidence="1">
    <location>
        <position position="287"/>
    </location>
</feature>
<feature type="glycosylation site" description="O-linked (Gal...) hydroxylysine" evidence="1">
    <location>
        <position position="299"/>
    </location>
</feature>
<feature type="glycosylation site" description="O-linked (Gal...) hydroxylysine" evidence="1">
    <location>
        <position position="308"/>
    </location>
</feature>
<feature type="glycosylation site" description="O-linked (Gal...) hydroxylysine" evidence="1">
    <location>
        <position position="374"/>
    </location>
</feature>
<feature type="glycosylation site" description="O-linked (Gal...) hydroxylysine" evidence="1">
    <location>
        <position position="608"/>
    </location>
</feature>
<feature type="glycosylation site" description="O-linked (Gal...) hydroxylysine" evidence="1">
    <location>
        <position position="620"/>
    </location>
</feature>
<feature type="glycosylation site" description="O-linked (Gal...) hydroxylysine" evidence="1">
    <location>
        <position position="1130"/>
    </location>
</feature>
<feature type="glycosylation site" description="N-linked (GlcNAc...) asparagine">
    <location>
        <position position="1388"/>
    </location>
</feature>
<feature type="disulfide bond" evidence="5">
    <location>
        <begin position="1283"/>
        <end position="1315"/>
    </location>
</feature>
<feature type="disulfide bond" description="Interchain (with C-1306)" evidence="5">
    <location>
        <position position="1289"/>
    </location>
</feature>
<feature type="disulfide bond" description="Interchain (with C-1289)" evidence="5">
    <location>
        <position position="1306"/>
    </location>
</feature>
<feature type="disulfide bond" evidence="5">
    <location>
        <begin position="1323"/>
        <end position="1485"/>
    </location>
</feature>
<feature type="disulfide bond" evidence="5">
    <location>
        <begin position="1393"/>
        <end position="1438"/>
    </location>
</feature>
<feature type="splice variant" id="VSP_022365" description="In isoform 3." evidence="68">
    <location>
        <begin position="1"/>
        <end position="1219"/>
    </location>
</feature>
<feature type="splice variant" id="VSP_022366" description="In isoform 1." evidence="65 66">
    <original>QEAGSCVQDGQRYNDKDVWKPEPCRICVCDTGTVLCDDIICEDVKDCLSPEIPFGECCPICPTDLATASG</original>
    <variation>R</variation>
    <location>
        <begin position="29"/>
        <end position="98"/>
    </location>
</feature>
<feature type="sequence variant" id="VAR_017638" description="In dbSNP:rs3803183." evidence="26 32 40 42 43 61">
    <original>T</original>
    <variation>S</variation>
    <location>
        <position position="9"/>
    </location>
</feature>
<feature type="sequence variant" id="VAR_063891" description="In STL1O; dbSNP:rs121912898." evidence="24">
    <original>C</original>
    <variation>Y</variation>
    <location>
        <position position="57"/>
    </location>
</feature>
<feature type="sequence variant" id="VAR_033782" description="In dbSNP:rs34392760." evidence="26">
    <original>E</original>
    <variation>D</variation>
    <location>
        <position position="142"/>
    </location>
</feature>
<feature type="sequence variant" id="VAR_019836" description="In dbSNP:rs1050861." evidence="40">
    <original>P</original>
    <variation>L</variation>
    <location>
        <position position="158"/>
    </location>
</feature>
<feature type="sequence variant" id="VAR_075729" description="In SEDSTN; dbSNP:rs869312907." evidence="41">
    <original>G</original>
    <variation>R</variation>
    <location>
        <position position="207"/>
    </location>
</feature>
<feature type="sequence variant" id="VAR_063892" description="In STL1; dbSNP:rs1592232040." evidence="31">
    <original>G</original>
    <variation>D</variation>
    <location>
        <position position="240"/>
    </location>
</feature>
<feature type="sequence variant" id="VAR_001738" description="In STL1O; dbSNP:rs121912872." evidence="54">
    <original>G</original>
    <variation>D</variation>
    <location>
        <position position="267"/>
    </location>
</feature>
<feature type="sequence variant" id="VAR_063893" description="In STL1." evidence="31">
    <original>G</original>
    <variation>R</variation>
    <location>
        <position position="270"/>
    </location>
</feature>
<feature type="sequence variant" id="VAR_001739" description="In CZECHD; dbSNP:rs121912876." evidence="27 29 48 53">
    <original>R</original>
    <variation>C</variation>
    <location>
        <position position="275"/>
    </location>
</feature>
<feature type="sequence variant" id="VAR_063894" description="In STL1." evidence="31">
    <original>G</original>
    <variation>D</variation>
    <location>
        <position position="282"/>
    </location>
</feature>
<feature type="sequence variant" id="VAR_001740" description="In STL1." evidence="51">
    <location>
        <begin position="302"/>
        <end position="308"/>
    </location>
</feature>
<feature type="sequence variant" id="VAR_001741" description="In KD; abnormal allele expressed in the cartilage; dbSNP:rs121912877." evidence="50">
    <original>G</original>
    <variation>D</variation>
    <location>
        <position position="303"/>
    </location>
</feature>
<feature type="sequence variant" id="VAR_023925" description="In DRRD; dbSNP:rs121912894." evidence="19">
    <original>G</original>
    <variation>R</variation>
    <location>
        <position position="318"/>
    </location>
</feature>
<feature type="sequence variant" id="VAR_001742" description="In spondylometaphyseal dysplasia; congenital type; dbSNP:rs121912871." evidence="57">
    <original>G</original>
    <variation>R</variation>
    <location>
        <position position="354"/>
    </location>
</feature>
<feature type="sequence variant" id="VAR_001743" description="In SEDC.">
    <original>G</original>
    <variation>R</variation>
    <location>
        <position position="375"/>
    </location>
</feature>
<feature type="sequence variant" id="VAR_001744" description="In SEDC." evidence="52">
    <original>G</original>
    <variation>S</variation>
    <location>
        <position position="447"/>
    </location>
</feature>
<feature type="sequence variant" id="VAR_063895" description="In STL1; dbSNP:rs794727339." evidence="31">
    <original>G</original>
    <variation>A</variation>
    <location>
        <position position="453"/>
    </location>
</feature>
<feature type="sequence variant" id="VAR_017639" description="In ACG2; dbSNP:rs794727339." evidence="9">
    <original>G</original>
    <variation>D</variation>
    <location>
        <position position="453"/>
    </location>
</feature>
<feature type="sequence variant" id="VAR_017640" description="In ACG2." evidence="9">
    <original>G</original>
    <variation>V</variation>
    <location>
        <position position="453"/>
    </location>
</feature>
<feature type="sequence variant" id="VAR_001745" description="In SEMDSTWK; dbSNP:rs121912881." evidence="46">
    <original>G</original>
    <variation>V</variation>
    <location>
        <position position="492"/>
    </location>
</feature>
<feature type="sequence variant" id="VAR_063896" description="In STL1; dbSNP:rs866502805." evidence="31">
    <original>G</original>
    <variation>R</variation>
    <location>
        <position position="501"/>
    </location>
</feature>
<feature type="sequence variant" id="VAR_001746" description="In SEMDSTWK; dbSNP:rs121912880." evidence="46">
    <original>G</original>
    <variation>C</variation>
    <location>
        <position position="504"/>
    </location>
</feature>
<feature type="sequence variant" id="VAR_001747" description="In ACG2.">
    <original>G</original>
    <variation>D</variation>
    <location>
        <position position="510"/>
    </location>
</feature>
<feature type="sequence variant" id="VAR_024819" description="In ACG2; dbSNP:rs1555167156." evidence="8">
    <original>G</original>
    <variation>S</variation>
    <location>
        <position position="513"/>
    </location>
</feature>
<feature type="sequence variant" id="VAR_023926" description="In ACG2; dbSNP:rs121912888." evidence="16">
    <original>G</original>
    <variation>D</variation>
    <location>
        <position position="516"/>
    </location>
</feature>
<feature type="sequence variant" id="VAR_063897" description="In ACG2." evidence="25">
    <original>D</original>
    <variation>V</variation>
    <location>
        <position position="547"/>
    </location>
</feature>
<feature type="sequence variant" id="VAR_023927" description="In STL1; dbSNP:rs121912884." evidence="10">
    <original>R</original>
    <variation>C</variation>
    <location>
        <position position="565"/>
    </location>
</feature>
<feature type="sequence variant" id="VAR_033783" description="In dbSNP:rs41263847." evidence="26">
    <original>T</original>
    <variation>I</variation>
    <location>
        <position position="638"/>
    </location>
</feature>
<feature type="sequence variant" id="VAR_023928" description="In DRRD; dbSNP:rs121912885." evidence="10 19">
    <original>L</original>
    <variation>F</variation>
    <location>
        <position position="667"/>
    </location>
</feature>
<feature type="sequence variant" id="VAR_023929" description="In ANFH1; dbSNP:rs387906558." evidence="20">
    <original>G</original>
    <variation>S</variation>
    <location>
        <position position="717"/>
    </location>
</feature>
<feature type="sequence variant" id="VAR_024820" description="In ACG2." evidence="8">
    <original>G</original>
    <variation>V</variation>
    <location>
        <position position="717"/>
    </location>
</feature>
<feature type="sequence variant" id="VAR_001748" description="In OSCDP; also in mild spondyloepiphyseal dysplasia and precocious osteoarthritis; dbSNP:rs121912865." evidence="28 30 48 58 62">
    <original>R</original>
    <variation>C</variation>
    <location>
        <position position="719"/>
    </location>
</feature>
<feature type="sequence variant" id="VAR_024821" description="In ACG2." evidence="8">
    <original>G</original>
    <variation>A</variation>
    <location>
        <position position="771"/>
    </location>
</feature>
<feature type="sequence variant" id="VAR_017641" description="In ACG2." evidence="9">
    <original>G</original>
    <variation>D</variation>
    <location>
        <position position="771"/>
    </location>
</feature>
<feature type="sequence variant" id="VAR_001749" description="In SEDC and hypochondrogenesis; lethal; dbSNP:rs121912867." evidence="13">
    <original>G</original>
    <variation>S</variation>
    <location>
        <position position="774"/>
    </location>
</feature>
<feature type="sequence variant" id="VAR_017642" description="In ACG2." evidence="9">
    <original>G</original>
    <variation>R</variation>
    <location>
        <position position="780"/>
    </location>
</feature>
<feature type="sequence variant" id="VAR_017643" description="In ACG2." evidence="9">
    <original>G</original>
    <variation>R</variation>
    <location>
        <position position="795"/>
    </location>
</feature>
<feature type="sequence variant" id="VAR_001751" description="In hypochondrogenesis.">
    <original>G</original>
    <variation>A</variation>
    <location>
        <position position="804"/>
    </location>
</feature>
<feature type="sequence variant" id="VAR_023930" description="In SEDC; dbSNP:rs1193507525.">
    <original>G</original>
    <variation>S</variation>
    <location>
        <position position="855"/>
    </location>
</feature>
<feature type="sequence variant" id="VAR_090356" description="In SMDALG; uncertain significance." evidence="37">
    <original>G</original>
    <variation>V</variation>
    <location>
        <position position="861"/>
    </location>
</feature>
<feature type="sequence variant" id="VAR_001752" description="In ACG2 and SEDC; dbSNP:rs121912879." evidence="47 48">
    <original>G</original>
    <variation>R</variation>
    <location>
        <position position="891"/>
    </location>
</feature>
<feature type="sequence variant" id="VAR_017644" description="In ACG2." evidence="9">
    <original>G</original>
    <variation>E</variation>
    <location>
        <position position="894"/>
    </location>
</feature>
<feature type="sequence variant" id="VAR_023931" description="In SEMDSTWK; dbSNP:rs1281743095." evidence="64">
    <original>G</original>
    <variation>V</variation>
    <location>
        <position position="897"/>
    </location>
</feature>
<feature type="sequence variant" id="VAR_017645" description="In EDMMD and STL1; dbSNP:rs121912882." evidence="31 63">
    <original>R</original>
    <variation>C</variation>
    <location>
        <position position="904"/>
    </location>
</feature>
<feature type="sequence variant" id="VAR_001753" description="In SEMDSTWK; dbSNP:rs121912875." evidence="46 64">
    <original>G</original>
    <variation>C</variation>
    <location>
        <position position="909"/>
    </location>
</feature>
<feature type="sequence variant" id="VAR_017646" description="In ACG2." evidence="9">
    <original>G</original>
    <variation>D</variation>
    <location>
        <position position="948"/>
    </location>
</feature>
<feature type="sequence variant" id="VAR_001754" description="In ACG2; dbSNP:rs121912878." evidence="49">
    <original>G</original>
    <variation>S</variation>
    <location>
        <position position="969"/>
    </location>
</feature>
<feature type="sequence variant" id="VAR_017647" description="In ACG2; dbSNP:rs2136526515." evidence="9">
    <original>G</original>
    <variation>S</variation>
    <location>
        <position position="981"/>
    </location>
</feature>
<feature type="sequence variant" id="VAR_001755" description="In SEDC; dbSNP:rs121912874." evidence="55">
    <original>R</original>
    <variation>C</variation>
    <location>
        <position position="989"/>
    </location>
</feature>
<feature type="sequence variant" id="VAR_023932" description="In SEMDSTWK; dbSNP:rs121912895." evidence="21">
    <original>R</original>
    <variation>G</variation>
    <location>
        <position position="992"/>
    </location>
</feature>
<feature type="sequence variant" id="VAR_001756" description="In hypochondrogenesis; dbSNP:rs753342774.">
    <original>G</original>
    <variation>S</variation>
    <location>
        <position position="1005"/>
    </location>
</feature>
<feature type="sequence variant" id="VAR_017648" description="In hypochondrogenesis." evidence="9">
    <location>
        <begin position="1017"/>
        <end position="1022"/>
    </location>
</feature>
<feature type="sequence variant" id="VAR_001757" description="In ACG2.">
    <original>G</original>
    <variation>V</variation>
    <location>
        <position position="1017"/>
    </location>
</feature>
<feature type="sequence variant" id="VAR_033784" description="In dbSNP:rs41272041." evidence="26">
    <original>A</original>
    <variation>T</variation>
    <location>
        <position position="1051"/>
    </location>
</feature>
<feature type="sequence variant" id="VAR_001758" description="In hypochondrogenesis; lethal; dbSNP:rs121912868." evidence="14">
    <original>G</original>
    <variation>E</variation>
    <location>
        <position position="1053"/>
    </location>
</feature>
<feature type="sequence variant" id="VAR_017649" description="In ACG2." evidence="9">
    <original>G</original>
    <variation>V</variation>
    <location>
        <position position="1065"/>
    </location>
</feature>
<feature type="sequence variant" id="VAR_090357" description="In SMDALG; uncertain significance." evidence="45">
    <original>G</original>
    <variation>D</variation>
    <location>
        <position position="1092"/>
    </location>
</feature>
<feature type="sequence variant" id="VAR_001759" description="In ACG2; dbSNP:rs1938737050." evidence="8">
    <original>G</original>
    <variation>C</variation>
    <location>
        <position position="1110"/>
    </location>
</feature>
<feature type="sequence variant" id="VAR_001760" description="In hypochondrogenesis." evidence="59">
    <original>G</original>
    <variation>C</variation>
    <location>
        <position position="1113"/>
    </location>
</feature>
<feature type="sequence variant" id="VAR_017650" description="In ACG2." evidence="9">
    <original>G</original>
    <variation>R</variation>
    <location>
        <position position="1119"/>
    </location>
</feature>
<feature type="sequence variant" id="VAR_001761" description="In ACG2; dbSNP:rs2136518157." evidence="8 39">
    <original>G</original>
    <variation>S</variation>
    <location>
        <position position="1143"/>
    </location>
</feature>
<feature type="sequence variant" id="VAR_063898" description="In STL1." evidence="31">
    <original>G</original>
    <variation>A</variation>
    <location>
        <position position="1158"/>
    </location>
</feature>
<feature type="sequence variant" id="VAR_001762" description="In SEDC.">
    <location>
        <begin position="1164"/>
        <end position="1199"/>
    </location>
</feature>
<feature type="sequence variant" id="VAR_023933" description="In ANFH1 and LCPD; dbSNP:rs121912891." evidence="20 23">
    <original>G</original>
    <variation>S</variation>
    <location>
        <position position="1170"/>
    </location>
</feature>
<feature type="sequence variant" id="VAR_017651" description="In SEDC; dbSNP:rs121912883." evidence="7">
    <original>G</original>
    <variation>R</variation>
    <location>
        <position position="1173"/>
    </location>
</feature>
<feature type="sequence variant" id="VAR_001763" description="In SEDC; dbSNP:rs2136514418." evidence="48">
    <original>G</original>
    <variation>S</variation>
    <location>
        <position position="1176"/>
    </location>
</feature>
<feature type="sequence variant" id="VAR_066836" description="Mutation found in a patient with features of multiple epiphyseal dysplasia; features overlap with SEDC." evidence="34">
    <original>G</original>
    <variation>V</variation>
    <location>
        <position position="1176"/>
    </location>
</feature>
<feature type="sequence variant" id="VAR_066837" description="Mutation found in a patient with features of multiple epiphyseal dysplasia; features overlap with SEDC." evidence="34">
    <original>G</original>
    <variation>R</variation>
    <location>
        <position position="1179"/>
    </location>
</feature>
<feature type="sequence variant" id="VAR_019837" description="In SEDC." evidence="35">
    <original>I</original>
    <variation>IGPSGKDGANGIPGPI</variation>
    <location>
        <position position="1184"/>
    </location>
</feature>
<feature type="sequence variant" id="VAR_001764" description="In ACG2." evidence="48">
    <original>G</original>
    <variation>R</variation>
    <location>
        <position position="1188"/>
    </location>
</feature>
<feature type="sequence variant" id="VAR_001765" description="In SEDC; dbSNP:rs121912870." evidence="56">
    <original>G</original>
    <variation>S</variation>
    <location>
        <position position="1197"/>
    </location>
</feature>
<feature type="sequence variant" id="VAR_001766" description="In KD." evidence="60">
    <location>
        <begin position="1207"/>
        <end position="1212"/>
    </location>
</feature>
<feature type="sequence variant" id="VAR_023934" description="In VPED; dbSNP:rs121912887." evidence="12">
    <original>G</original>
    <variation>D</variation>
    <location>
        <position position="1305"/>
    </location>
</feature>
<feature type="sequence variant" id="VAR_017652" description="In dbSNP:rs12721427." evidence="9 26">
    <original>V</original>
    <variation>I</variation>
    <location>
        <position position="1331"/>
    </location>
</feature>
<feature type="sequence variant" id="VAR_075730" description="In ANFH1; dbSNP:rs138498898." evidence="33">
    <original>T</original>
    <variation>M</variation>
    <location>
        <position position="1383"/>
    </location>
</feature>
<feature type="sequence variant" id="VAR_024822" description="In PLSD-T; phenotype previously considered as achondrogenesis-hypochondrogenesis type 2." evidence="8 18">
    <original>T</original>
    <variation>N</variation>
    <location>
        <position position="1390"/>
    </location>
</feature>
<feature type="sequence variant" id="VAR_023935" description="In PLSD-T; dbSNP:rs121912889." evidence="15">
    <original>Y</original>
    <variation>C</variation>
    <location>
        <position position="1391"/>
    </location>
</feature>
<feature type="sequence variant" id="VAR_033785" description="In dbSNP:rs2070739." evidence="26">
    <original>G</original>
    <variation>S</variation>
    <location>
        <position position="1405"/>
    </location>
</feature>
<feature type="sequence variant" id="VAR_017105" description="In SEDC; dbSNP:rs121912886." evidence="11">
    <original>T</original>
    <variation>M</variation>
    <location>
        <position position="1439"/>
    </location>
</feature>
<feature type="sequence variant" id="VAR_024823" description="In PLSD-T." evidence="18">
    <original>T</original>
    <variation>P</variation>
    <location>
        <position position="1448"/>
    </location>
</feature>
<feature type="sequence variant" id="VAR_079748" description="In dbSNP:rs148838496." evidence="44">
    <original>R</original>
    <variation>C</variation>
    <location>
        <position position="1459"/>
    </location>
</feature>
<feature type="sequence variant" id="VAR_024824" description="In PLSD-T." evidence="18">
    <original>D</original>
    <variation>H</variation>
    <location>
        <position position="1469"/>
    </location>
</feature>
<feature type="sequence variant" id="VAR_024825" description="In PLSD-T." evidence="18">
    <location>
        <position position="1484"/>
    </location>
</feature>
<feature type="sequence variant" id="VAR_024826" description="In PLSD-T." evidence="18">
    <original>C</original>
    <variation>G</variation>
    <location>
        <position position="1485"/>
    </location>
</feature>
<feature type="sequence conflict" description="In Ref. 1; CAA34488." evidence="69" ref="1">
    <original>G</original>
    <variation>D</variation>
    <location>
        <position position="441"/>
    </location>
</feature>
<feature type="sequence conflict" description="In Ref. 1; CAA34488." evidence="69" ref="1">
    <original>E</original>
    <variation>K</variation>
    <location>
        <position position="457"/>
    </location>
</feature>
<feature type="sequence conflict" description="In Ref. 15; AAB60370." evidence="69" ref="15">
    <original>A</original>
    <variation>P</variation>
    <location>
        <position position="481"/>
    </location>
</feature>
<feature type="sequence conflict" description="In Ref. 1; CAA34488 and 16; CAA32030." evidence="69" ref="1 16">
    <original>A</original>
    <variation>E</variation>
    <location>
        <position position="641"/>
    </location>
</feature>
<feature type="sequence conflict" description="In Ref. 16; CAA32030." evidence="69" ref="16">
    <original>G</original>
    <variation>A</variation>
    <location>
        <position position="677"/>
    </location>
</feature>
<feature type="sequence conflict" description="In Ref. 16; CAA32030." evidence="69" ref="16">
    <original>G</original>
    <variation>A</variation>
    <location>
        <position position="784"/>
    </location>
</feature>
<feature type="sequence conflict" description="In Ref. 1; CAA34488." evidence="69" ref="1">
    <original>PAGF</original>
    <variation>TSGI</variation>
    <location>
        <begin position="832"/>
        <end position="835"/>
    </location>
</feature>
<feature type="sequence conflict" description="In Ref. 1; CAA34488 and 16; CAA32030." evidence="69" ref="1 16">
    <original>K</original>
    <variation>Q</variation>
    <location>
        <position position="1006"/>
    </location>
</feature>
<feature type="sequence conflict" description="In Ref. 6; CAA34683." evidence="69" ref="6">
    <original>E</original>
    <variation>Q</variation>
    <location>
        <position position="1037"/>
    </location>
</feature>
<feature type="sequence conflict" description="In Ref. 17; AAD15287/CAA26223 and 19; AAA51997." evidence="69" ref="17 19">
    <original>D</original>
    <variation>N</variation>
    <location>
        <position position="1057"/>
    </location>
</feature>
<feature type="sequence conflict" description="In Ref. 6; CAA34683, 17; AAD15287/CAA26223 and 19; AAA51997." evidence="69" ref="6 17 19">
    <original>A</original>
    <variation>T</variation>
    <location>
        <position position="1069"/>
    </location>
</feature>
<feature type="sequence conflict" description="In Ref. 24; CAA29604." evidence="69" ref="24">
    <original>Q</original>
    <variation>E</variation>
    <location>
        <position position="1243"/>
    </location>
</feature>
<feature type="sequence conflict" description="In Ref. 24; CAA29604." evidence="69" ref="24">
    <original>G</original>
    <variation>N</variation>
    <location>
        <position position="1247"/>
    </location>
</feature>
<feature type="sequence conflict" description="In Ref. 21; AAA52038." evidence="69" ref="21">
    <original>S</original>
    <variation>T</variation>
    <location>
        <position position="1271"/>
    </location>
</feature>
<feature type="sequence conflict" description="In Ref. 21; AAA52038." evidence="69" ref="21">
    <original>G</original>
    <variation>A</variation>
    <location>
        <position position="1274"/>
    </location>
</feature>
<feature type="sequence conflict" description="In Ref. 28; M12048." evidence="69" ref="28">
    <original>K</original>
    <variation>R</variation>
    <location>
        <position position="1333"/>
    </location>
</feature>
<feature type="sequence conflict" description="In Ref. 28; M12048." evidence="69" ref="28">
    <original>G</original>
    <variation>A</variation>
    <location>
        <position position="1350"/>
    </location>
</feature>
<feature type="sequence conflict" description="In Ref. 17; CAA26223." evidence="69" ref="17">
    <original>N</original>
    <variation>D</variation>
    <location>
        <position position="1372"/>
    </location>
</feature>
<feature type="sequence conflict" description="In Ref. 17; CAA26223." evidence="69" ref="17">
    <original>T</original>
    <variation>A</variation>
    <location>
        <position position="1383"/>
    </location>
</feature>
<feature type="sequence conflict" description="In Ref. 17; CAA26223." evidence="69" ref="17">
    <original>L</original>
    <variation>M</variation>
    <location>
        <position position="1400"/>
    </location>
</feature>
<feature type="strand" evidence="71">
    <location>
        <begin position="34"/>
        <end position="36"/>
    </location>
</feature>
<feature type="strand" evidence="71">
    <location>
        <begin position="39"/>
        <end position="41"/>
    </location>
</feature>
<feature type="strand" evidence="71">
    <location>
        <begin position="46"/>
        <end position="50"/>
    </location>
</feature>
<feature type="strand" evidence="71">
    <location>
        <begin position="53"/>
        <end position="58"/>
    </location>
</feature>
<feature type="strand" evidence="71">
    <location>
        <begin position="61"/>
        <end position="70"/>
    </location>
</feature>
<feature type="turn" evidence="71">
    <location>
        <begin position="93"/>
        <end position="95"/>
    </location>
</feature>
<feature type="helix" evidence="72">
    <location>
        <begin position="487"/>
        <end position="489"/>
    </location>
</feature>
<gene>
    <name evidence="70" type="primary">COL2A1</name>
</gene>
<name>CO2A1_HUMAN</name>
<keyword id="KW-0002">3D-structure</keyword>
<keyword id="KW-0025">Alternative splicing</keyword>
<keyword id="KW-0106">Calcium</keyword>
<keyword id="KW-0898">Cataract</keyword>
<keyword id="KW-0176">Collagen</keyword>
<keyword id="KW-0209">Deafness</keyword>
<keyword id="KW-0903">Direct protein sequencing</keyword>
<keyword id="KW-0225">Disease variant</keyword>
<keyword id="KW-1015">Disulfide bond</keyword>
<keyword id="KW-0242">Dwarfism</keyword>
<keyword id="KW-0272">Extracellular matrix</keyword>
<keyword id="KW-0325">Glycoprotein</keyword>
<keyword id="KW-0379">Hydroxylation</keyword>
<keyword id="KW-0479">Metal-binding</keyword>
<keyword id="KW-1267">Proteomics identification</keyword>
<keyword id="KW-1185">Reference proteome</keyword>
<keyword id="KW-0677">Repeat</keyword>
<keyword id="KW-0964">Secreted</keyword>
<keyword id="KW-0732">Signal</keyword>
<keyword id="KW-0757">Stickler syndrome</keyword>
<reference key="1">
    <citation type="journal article" date="1989" name="Nucleic Acids Res.">
        <title>Nucleotide sequence of the full length cDNA encoding for human type II procollagen.</title>
        <authorList>
            <person name="Su M.W."/>
            <person name="Lee B."/>
            <person name="Ramirez F."/>
            <person name="Machado M.A."/>
            <person name="Horton W.A."/>
        </authorList>
    </citation>
    <scope>NUCLEOTIDE SEQUENCE [MRNA] (ISOFORM 1)</scope>
    <scope>VARIANTS SER-9 AND LEU-158</scope>
</reference>
<reference key="2">
    <citation type="journal article" date="1995" name="Biochem. J.">
        <title>Conservation of the sizes of 53 introns and over 100 intronic sequences for the binding of common transcription factors in the human and mouse genes for type II procollagen (COL2A1).</title>
        <authorList>
            <person name="Ala-Kokko L."/>
            <person name="Kvist A.-P."/>
            <person name="Metsaranta M."/>
            <person name="Kivirikko K.I."/>
            <person name="de Crombrugghe B."/>
            <person name="Prockop D.J."/>
            <person name="Vuorio E."/>
        </authorList>
    </citation>
    <scope>NUCLEOTIDE SEQUENCE [GENOMIC DNA] (ISOFORM 2)</scope>
    <scope>VARIANT SER-9</scope>
    <source>
        <tissue>Blood</tissue>
    </source>
</reference>
<reference key="3">
    <citation type="submission" date="2003-05" db="EMBL/GenBank/DDBJ databases">
        <title>Cloning of human full-length CDSs in BD Creator(TM) system donor vector.</title>
        <authorList>
            <person name="Kalnine N."/>
            <person name="Chen X."/>
            <person name="Rolfs A."/>
            <person name="Halleck A."/>
            <person name="Hines L."/>
            <person name="Eisenstein S."/>
            <person name="Koundinya M."/>
            <person name="Raphael J."/>
            <person name="Moreira D."/>
            <person name="Kelley T."/>
            <person name="LaBaer J."/>
            <person name="Lin Y."/>
            <person name="Phelan M."/>
            <person name="Farmer A."/>
        </authorList>
    </citation>
    <scope>NUCLEOTIDE SEQUENCE [LARGE SCALE MRNA] (ISOFORM 3)</scope>
</reference>
<reference key="4">
    <citation type="journal article" date="2006" name="Nature">
        <title>The finished DNA sequence of human chromosome 12.</title>
        <authorList>
            <person name="Scherer S.E."/>
            <person name="Muzny D.M."/>
            <person name="Buhay C.J."/>
            <person name="Chen R."/>
            <person name="Cree A."/>
            <person name="Ding Y."/>
            <person name="Dugan-Rocha S."/>
            <person name="Gill R."/>
            <person name="Gunaratne P."/>
            <person name="Harris R.A."/>
            <person name="Hawes A.C."/>
            <person name="Hernandez J."/>
            <person name="Hodgson A.V."/>
            <person name="Hume J."/>
            <person name="Jackson A."/>
            <person name="Khan Z.M."/>
            <person name="Kovar-Smith C."/>
            <person name="Lewis L.R."/>
            <person name="Lozado R.J."/>
            <person name="Metzker M.L."/>
            <person name="Milosavljevic A."/>
            <person name="Miner G.R."/>
            <person name="Montgomery K.T."/>
            <person name="Morgan M.B."/>
            <person name="Nazareth L.V."/>
            <person name="Scott G."/>
            <person name="Sodergren E."/>
            <person name="Song X.-Z."/>
            <person name="Steffen D."/>
            <person name="Lovering R.C."/>
            <person name="Wheeler D.A."/>
            <person name="Worley K.C."/>
            <person name="Yuan Y."/>
            <person name="Zhang Z."/>
            <person name="Adams C.Q."/>
            <person name="Ansari-Lari M.A."/>
            <person name="Ayele M."/>
            <person name="Brown M.J."/>
            <person name="Chen G."/>
            <person name="Chen Z."/>
            <person name="Clerc-Blankenburg K.P."/>
            <person name="Davis C."/>
            <person name="Delgado O."/>
            <person name="Dinh H.H."/>
            <person name="Draper H."/>
            <person name="Gonzalez-Garay M.L."/>
            <person name="Havlak P."/>
            <person name="Jackson L.R."/>
            <person name="Jacob L.S."/>
            <person name="Kelly S.H."/>
            <person name="Li L."/>
            <person name="Li Z."/>
            <person name="Liu J."/>
            <person name="Liu W."/>
            <person name="Lu J."/>
            <person name="Maheshwari M."/>
            <person name="Nguyen B.-V."/>
            <person name="Okwuonu G.O."/>
            <person name="Pasternak S."/>
            <person name="Perez L.M."/>
            <person name="Plopper F.J.H."/>
            <person name="Santibanez J."/>
            <person name="Shen H."/>
            <person name="Tabor P.E."/>
            <person name="Verduzco D."/>
            <person name="Waldron L."/>
            <person name="Wang Q."/>
            <person name="Williams G.A."/>
            <person name="Zhang J."/>
            <person name="Zhou J."/>
            <person name="Allen C.C."/>
            <person name="Amin A.G."/>
            <person name="Anyalebechi V."/>
            <person name="Bailey M."/>
            <person name="Barbaria J.A."/>
            <person name="Bimage K.E."/>
            <person name="Bryant N.P."/>
            <person name="Burch P.E."/>
            <person name="Burkett C.E."/>
            <person name="Burrell K.L."/>
            <person name="Calderon E."/>
            <person name="Cardenas V."/>
            <person name="Carter K."/>
            <person name="Casias K."/>
            <person name="Cavazos I."/>
            <person name="Cavazos S.R."/>
            <person name="Ceasar H."/>
            <person name="Chacko J."/>
            <person name="Chan S.N."/>
            <person name="Chavez D."/>
            <person name="Christopoulos C."/>
            <person name="Chu J."/>
            <person name="Cockrell R."/>
            <person name="Cox C.D."/>
            <person name="Dang M."/>
            <person name="Dathorne S.R."/>
            <person name="David R."/>
            <person name="Davis C.M."/>
            <person name="Davy-Carroll L."/>
            <person name="Deshazo D.R."/>
            <person name="Donlin J.E."/>
            <person name="D'Souza L."/>
            <person name="Eaves K.A."/>
            <person name="Egan A."/>
            <person name="Emery-Cohen A.J."/>
            <person name="Escotto M."/>
            <person name="Flagg N."/>
            <person name="Forbes L.D."/>
            <person name="Gabisi A.M."/>
            <person name="Garza M."/>
            <person name="Hamilton C."/>
            <person name="Henderson N."/>
            <person name="Hernandez O."/>
            <person name="Hines S."/>
            <person name="Hogues M.E."/>
            <person name="Huang M."/>
            <person name="Idlebird D.G."/>
            <person name="Johnson R."/>
            <person name="Jolivet A."/>
            <person name="Jones S."/>
            <person name="Kagan R."/>
            <person name="King L.M."/>
            <person name="Leal B."/>
            <person name="Lebow H."/>
            <person name="Lee S."/>
            <person name="LeVan J.M."/>
            <person name="Lewis L.C."/>
            <person name="London P."/>
            <person name="Lorensuhewa L.M."/>
            <person name="Loulseged H."/>
            <person name="Lovett D.A."/>
            <person name="Lucier A."/>
            <person name="Lucier R.L."/>
            <person name="Ma J."/>
            <person name="Madu R.C."/>
            <person name="Mapua P."/>
            <person name="Martindale A.D."/>
            <person name="Martinez E."/>
            <person name="Massey E."/>
            <person name="Mawhiney S."/>
            <person name="Meador M.G."/>
            <person name="Mendez S."/>
            <person name="Mercado C."/>
            <person name="Mercado I.C."/>
            <person name="Merritt C.E."/>
            <person name="Miner Z.L."/>
            <person name="Minja E."/>
            <person name="Mitchell T."/>
            <person name="Mohabbat F."/>
            <person name="Mohabbat K."/>
            <person name="Montgomery B."/>
            <person name="Moore N."/>
            <person name="Morris S."/>
            <person name="Munidasa M."/>
            <person name="Ngo R.N."/>
            <person name="Nguyen N.B."/>
            <person name="Nickerson E."/>
            <person name="Nwaokelemeh O.O."/>
            <person name="Nwokenkwo S."/>
            <person name="Obregon M."/>
            <person name="Oguh M."/>
            <person name="Oragunye N."/>
            <person name="Oviedo R.J."/>
            <person name="Parish B.J."/>
            <person name="Parker D.N."/>
            <person name="Parrish J."/>
            <person name="Parks K.L."/>
            <person name="Paul H.A."/>
            <person name="Payton B.A."/>
            <person name="Perez A."/>
            <person name="Perrin W."/>
            <person name="Pickens A."/>
            <person name="Primus E.L."/>
            <person name="Pu L.-L."/>
            <person name="Puazo M."/>
            <person name="Quiles M.M."/>
            <person name="Quiroz J.B."/>
            <person name="Rabata D."/>
            <person name="Reeves K."/>
            <person name="Ruiz S.J."/>
            <person name="Shao H."/>
            <person name="Sisson I."/>
            <person name="Sonaike T."/>
            <person name="Sorelle R.P."/>
            <person name="Sutton A.E."/>
            <person name="Svatek A.F."/>
            <person name="Svetz L.A."/>
            <person name="Tamerisa K.S."/>
            <person name="Taylor T.R."/>
            <person name="Teague B."/>
            <person name="Thomas N."/>
            <person name="Thorn R.D."/>
            <person name="Trejos Z.Y."/>
            <person name="Trevino B.K."/>
            <person name="Ukegbu O.N."/>
            <person name="Urban J.B."/>
            <person name="Vasquez L.I."/>
            <person name="Vera V.A."/>
            <person name="Villasana D.M."/>
            <person name="Wang L."/>
            <person name="Ward-Moore S."/>
            <person name="Warren J.T."/>
            <person name="Wei X."/>
            <person name="White F."/>
            <person name="Williamson A.L."/>
            <person name="Wleczyk R."/>
            <person name="Wooden H.S."/>
            <person name="Wooden S.H."/>
            <person name="Yen J."/>
            <person name="Yoon L."/>
            <person name="Yoon V."/>
            <person name="Zorrilla S.E."/>
            <person name="Nelson D."/>
            <person name="Kucherlapati R."/>
            <person name="Weinstock G."/>
            <person name="Gibbs R.A."/>
        </authorList>
    </citation>
    <scope>NUCLEOTIDE SEQUENCE [LARGE SCALE GENOMIC DNA]</scope>
</reference>
<reference key="5">
    <citation type="journal article" date="2004" name="Genome Res.">
        <title>The status, quality, and expansion of the NIH full-length cDNA project: the Mammalian Gene Collection (MGC).</title>
        <authorList>
            <consortium name="The MGC Project Team"/>
        </authorList>
    </citation>
    <scope>NUCLEOTIDE SEQUENCE [LARGE SCALE MRNA] (ISOFORM 2)</scope>
    <scope>NUCLEOTIDE SEQUENCE [LARGE SCALE MRNA] OF 1109-1487 (ISOFORMS 1/2)</scope>
    <source>
        <tissue>Embryonic stem cell</tissue>
        <tissue>Muscle</tissue>
    </source>
</reference>
<reference key="6">
    <citation type="journal article" date="1989" name="Biochem. J.">
        <title>Structure of cDNA clones coding for human type II procollagen. The alpha 1(II) chain is more similar to the alpha 1(I) chain than two other alpha chains of fibrillar collagens.</title>
        <authorList>
            <person name="Baldwin C.T."/>
            <person name="Reginato A.M."/>
            <person name="Smith C."/>
            <person name="Jimenez S.A."/>
            <person name="Prockop D.J."/>
        </authorList>
    </citation>
    <scope>NUCLEOTIDE SEQUENCE [MRNA] OF 1-1229 (ISOFORM 1)</scope>
    <scope>VARIANT SER-9</scope>
</reference>
<reference key="7">
    <citation type="journal article" date="1989" name="Genomics">
        <title>Organization of the exons coding for pro alpha 1(II) collagen N-propeptide confirms a distinct evolutionary history of this domain of the fibrillar collagen genes.</title>
        <authorList>
            <person name="Su M.W."/>
            <person name="Benson-Chanda V."/>
            <person name="Vissing H."/>
            <person name="Ramirez F."/>
        </authorList>
    </citation>
    <scope>NUCLEOTIDE SEQUENCE [GENOMIC DNA] OF 1-236 (ISOFORM 1)</scope>
    <scope>VARIANT SER-9</scope>
</reference>
<reference key="8">
    <citation type="journal article" date="1990" name="Genomics">
        <title>The human type II procollagen gene: identification of an additional protein-coding domain and location of potential regulatory sequences in the promoter and first intron.</title>
        <authorList>
            <person name="Ryan M.C."/>
            <person name="Sieraski M."/>
            <person name="Sandell L.J."/>
        </authorList>
    </citation>
    <scope>NUCLEOTIDE SEQUENCE [GENOMIC DNA] OF 1-103 (ISOFORM 2)</scope>
    <scope>VARIANT SER-9</scope>
</reference>
<reference key="9">
    <citation type="journal article" date="1986" name="Gene">
        <title>Promoter region of the human pro-alpha 1(II)-collagen gene.</title>
        <authorList>
            <person name="Nunez A.M."/>
            <person name="Kohno K."/>
            <person name="Martin G.R."/>
            <person name="Yamada Y."/>
        </authorList>
    </citation>
    <scope>NUCLEOTIDE SEQUENCE [GENOMIC DNA] OF 1-28 (ISOFORMS 1/2)</scope>
</reference>
<reference key="10">
    <citation type="journal article" date="1992" name="Biochem. J.">
        <title>Structural analysis of the regulatory elements of the type-II procollagen gene. Conservation of promoter and first intron sequences between human and mouse.</title>
        <authorList>
            <person name="Vikkula M."/>
            <person name="Metsaranta M."/>
            <person name="Syvaenen A.-C."/>
            <person name="Ala-Kokko L."/>
            <person name="Vuorio E."/>
            <person name="Peltonen L."/>
        </authorList>
    </citation>
    <scope>NUCLEOTIDE SEQUENCE [GENOMIC DNA] OF 1-28 (ISOFORMS 1/2)</scope>
</reference>
<reference key="11">
    <citation type="journal article" date="1990" name="J. Biol. Chem.">
        <title>Differential expression of a cysteine-rich domain in the amino-terminal propeptide of type II (cartilage) procollagen by alternative splicing of mRNA.</title>
        <authorList>
            <person name="Ryan M.C."/>
            <person name="Sandell L.J."/>
        </authorList>
    </citation>
    <scope>NUCLEOTIDE SEQUENCE OF 27-103 (ISOFORM 2)</scope>
    <scope>TISSUE SPECIFICITY</scope>
</reference>
<reference key="12">
    <citation type="journal article" date="1991" name="Eur. J. Biochem.">
        <title>Genomic organization of the human procollagen alpha 1(II) collagen gene.</title>
        <authorList>
            <person name="Huang M.C."/>
            <person name="Seyer J.M."/>
            <person name="Thompson J.P."/>
            <person name="Spinella D.G."/>
            <person name="Cheah K.S."/>
            <person name="Kang A.H."/>
        </authorList>
    </citation>
    <scope>NUCLEOTIDE SEQUENCE [GENOMIC DNA] OF 99-341 (ISOFORMS 1/2)</scope>
    <source>
        <tissue>Fetal sternum</tissue>
    </source>
</reference>
<reference key="13">
    <citation type="journal article" date="1996" name="Biochem. J.">
        <title>Collagen type IX from human cartilage: a structural profile of intermolecular cross-linking sites.</title>
        <authorList>
            <person name="Diab M."/>
            <person name="Wu J.J."/>
            <person name="Eyre D.R."/>
        </authorList>
    </citation>
    <scope>PROTEIN SEQUENCE OF 188-195 AND 1224-1236</scope>
</reference>
<reference key="14">
    <citation type="journal article" date="1995" name="Eur. J. Biochem.">
        <title>Immunohistochemical and biochemical analyses of 20,000-25,000-year-old fossil cartilage.</title>
        <authorList>
            <person name="Franc S."/>
            <person name="Marzin E."/>
            <person name="Boutillon M.-M."/>
            <person name="Lafont R."/>
            <person name="Lechene de la Porte P."/>
            <person name="Herbage D."/>
        </authorList>
    </citation>
    <scope>PROTEIN SEQUENCE OF 243-261; 575-590 AND 756-779</scope>
</reference>
<reference key="15">
    <citation type="journal article" date="1995" name="Am. J. Hum. Genet.">
        <title>An RNA-splicing mutation (G+5IVS20) in the type II collagen gene (COL2A1) in a family with spondyloepiphyseal dysplasia congenita.</title>
        <authorList>
            <person name="Tiller G.E."/>
            <person name="Weis M.A."/>
            <person name="Polumbo P.A."/>
            <person name="Gruber H.E."/>
            <person name="Rimoin D.L."/>
            <person name="Cohn D.H."/>
            <person name="Eyre D.R."/>
        </authorList>
    </citation>
    <scope>NUCLEOTIDE SEQUENCE [GENOMIC DNA] OF 440-509 (ISOFORMS 1/2)</scope>
</reference>
<reference key="16">
    <citation type="submission" date="1988-12" db="EMBL/GenBank/DDBJ databases">
        <authorList>
            <person name="Ramirez F."/>
        </authorList>
    </citation>
    <scope>NUCLEOTIDE SEQUENCE [MRNA] OF 501-1214 (ISOFORMS 1/2)</scope>
</reference>
<reference key="17">
    <citation type="journal article" date="1985" name="Nucleic Acids Res.">
        <title>Isolation and partial characterization of the entire human pro alpha 1(II) collagen gene.</title>
        <authorList>
            <person name="Sangiorgi F.O."/>
            <person name="Benson-Chanda V."/>
            <person name="de Wet W.J."/>
            <person name="Sobel M.E."/>
            <person name="Tsipouras P."/>
            <person name="Ramirez F."/>
        </authorList>
    </citation>
    <scope>NUCLEOTIDE SEQUENCE [GENOMIC DNA] OF 541-578; 784-803; 1056-1109 AND 1200-1487 (ISOFORMS 1/2)</scope>
</reference>
<reference key="18">
    <citation type="journal article" date="1989" name="FEBS Lett.">
        <title>Structural analyses of the polymorphic area in type II collagen gene.</title>
        <authorList>
            <person name="Vikkula M."/>
            <person name="Peltonen L."/>
        </authorList>
    </citation>
    <scope>NUCLEOTIDE SEQUENCE [GENOMIC DNA] OF 630-785 (ISOFORMS 1/2)</scope>
</reference>
<reference key="19">
    <citation type="journal article" date="1985" name="Proc. Natl. Acad. Sci. U.S.A.">
        <title>Identification and characterization of the human type II collagen gene (COL2A1).</title>
        <authorList>
            <person name="Cheah K.S.E."/>
            <person name="Stoker N.G."/>
            <person name="Griffin J.R."/>
            <person name="Grosveld F.G."/>
            <person name="Solomon E."/>
        </authorList>
    </citation>
    <scope>NUCLEOTIDE SEQUENCE [GENOMIC DNA] OF 1032-1487 (ISOFORMS 1/2)</scope>
</reference>
<reference key="20">
    <citation type="journal article" date="1992" name="J. Biol. Chem.">
        <title>An amino acid substitution (Gly853--&gt;Glu) in the collagen alpha 1(II) chain produces hypochondrogenesis.</title>
        <authorList>
            <person name="Bogaert R."/>
            <person name="Tiller G.E."/>
            <person name="Wies M.A."/>
            <person name="Gruber H.E."/>
            <person name="Rimoin D.L."/>
            <person name="Cohn D.H."/>
            <person name="Eyre D.R."/>
        </authorList>
    </citation>
    <scope>NUCLEOTIDE SEQUENCE [GENOMIC DNA] OF 1038-1055 (ISOFORMS 1/2)</scope>
    <scope>VARIANT HYPOCHONDROGENESIS GLU-1053</scope>
</reference>
<reference key="21">
    <citation type="journal article" date="1991" name="J. Biol. Chem.">
        <title>Low basal transcription of genes for tissue-specific collagens by fibroblasts and lymphoblastoid cells. Application to the characterization of a glycine 997 to serine substitution in alpha 1(II) collagen chains of a patient with spondyloepiphyseal dysplasia.</title>
        <authorList>
            <person name="Chan D."/>
            <person name="Cole W.G."/>
        </authorList>
    </citation>
    <scope>NUCLEOTIDE SEQUENCE [MRNA] OF 1082-1288 (ISOFORMS 1/2)</scope>
</reference>
<reference key="22">
    <citation type="journal article" date="1989" name="Science">
        <title>Identification of the molecular defect in a family with spondyloepiphyseal dysplasia.</title>
        <authorList>
            <person name="Lee B."/>
            <person name="Vissing H."/>
            <person name="Ramirez F."/>
            <person name="Rogers D."/>
            <person name="Rimoin D.L."/>
        </authorList>
    </citation>
    <scope>NUCLEOTIDE SEQUENCE [GENOMIC DNA] OF 1146-1199 (ISOFORMS 1/2)</scope>
    <scope>VARIANT SEDC 1164-GLY--TYR-1399 DEL</scope>
</reference>
<reference key="23">
    <citation type="journal article" date="1990" name="Proc. Natl. Acad. Sci. U.S.A.">
        <title>Tandem duplication within a type II collagen gene (COL2A1) exon in an individual with spondyloepiphyseal dysplasia.</title>
        <authorList>
            <person name="Tiller G.E."/>
            <person name="Rimoin D.L."/>
            <person name="Murray L.W."/>
            <person name="Cohn D.H."/>
        </authorList>
    </citation>
    <scope>NUCLEOTIDE SEQUENCE OF 1164-1199 (ISOFORMS 1/2)</scope>
    <scope>VARIANT SEDC GLY-PRO-SER-GLY-LYS-ASP-GLY-ALA-ASN-GLY-ILE-PRO-GLY-PRO-ILE-1184 INS</scope>
</reference>
<reference key="24">
    <citation type="journal article" date="1987" name="Nucleic Acids Res.">
        <title>Determination of the single polyadenylation site of the human pro alpha 1(II) collagen gene.</title>
        <authorList>
            <person name="Elima K."/>
            <person name="Vuorio T."/>
            <person name="Vuorio E."/>
        </authorList>
    </citation>
    <scope>NUCLEOTIDE SEQUENCE [MRNA] OF 1175-1487 (ISOFORMS 1/2)</scope>
</reference>
<reference key="25">
    <citation type="journal article" date="1985" name="Biochem. J.">
        <title>Construction and identification of a cDNA clone for human type II procollagen mRNA.</title>
        <authorList>
            <person name="Elima K."/>
            <person name="Maekelae J.K."/>
            <person name="Vuorio T."/>
            <person name="Kauppinen S."/>
            <person name="Knowles J."/>
            <person name="Vuorio E."/>
        </authorList>
    </citation>
    <scope>NUCLEOTIDE SEQUENCE [MRNA] OF 1189-1467 (ISOFORMS 1/2)</scope>
</reference>
<reference key="26">
    <citation type="journal article" date="1986" name="Biochem. J.">
        <title>Chondrocalcin is identical with the C-propeptide of type II procollagen.</title>
        <authorList>
            <person name="Van der Rest M."/>
            <person name="Rosenberg L.C."/>
            <person name="Olsen B.R."/>
            <person name="Poole A.R."/>
        </authorList>
    </citation>
    <scope>PROTEIN SEQUENCE OF 1242-1265; 1295-1305 AND 1395-1408</scope>
</reference>
<reference key="27">
    <citation type="journal article" date="1984" name="Nucleic Acids Res.">
        <title>Isolation and characterization of genomic clones corresponding to the human type II procollagen gene.</title>
        <authorList>
            <person name="Strom C.M."/>
            <person name="Upholt W.B."/>
        </authorList>
    </citation>
    <scope>NUCLEOTIDE SEQUENCE [GENOMIC DNA] OF 1245-1295 (ISOFORMS 1/2/3)</scope>
</reference>
<reference key="28">
    <citation type="journal article" date="1985" name="Biochemistry">
        <title>Isolation and partial characterization of genomic clones coding for a human pro-alpha 1 (II) collagen chain and demonstration of restriction fragment length polymorphism at the 3' end of the gene.</title>
        <authorList>
            <person name="Nunez A.M."/>
            <person name="Francomano C."/>
            <person name="Young M.F."/>
            <person name="Martin G.R."/>
            <person name="Yamada Y."/>
        </authorList>
    </citation>
    <scope>NUCLEOTIDE SEQUENCE [GENOMIC DNA] OF 1296-1358 (ISOFORMS 1/2/3)</scope>
</reference>
<reference key="29">
    <citation type="journal article" date="2013" name="Mol. Syndromol.">
        <title>COL2A1 Mutation in Spondylometaphyseal Dysplasia Algerian Type.</title>
        <authorList>
            <person name="Matsubayashi S."/>
            <person name="Ikema M."/>
            <person name="Ninomiya Y."/>
            <person name="Yamaguchi K."/>
            <person name="Ikegawa S."/>
            <person name="Nishimura G."/>
        </authorList>
    </citation>
    <scope>INVOLVEMENT IN SMDALG</scope>
    <scope>VARIANT SMDALG VAL-861</scope>
</reference>
<reference key="30">
    <citation type="journal article" date="2023" name="J. Pediatr. Genet.">
        <title>A Severe Case of Spondylometaphyseal Dysplasia Algerian Type with Two Mutations in COL2A1.</title>
        <authorList>
            <person name="Cammarata-Scalisi F."/>
            <person name="Matysiak U."/>
            <person name="Willoughby C.E."/>
            <person name="Ruzaike G."/>
            <person name="Cardenas Tadich A."/>
            <person name="Araya Castillo M."/>
            <person name="Zara-Chirinos C."/>
            <person name="Bracho A."/>
            <person name="Avendano A."/>
            <person name="Jilani H."/>
            <person name="Callea M."/>
        </authorList>
    </citation>
    <scope>INVOLVEMENT IN SMDALG</scope>
    <scope>VARIANT SMDALG ASP-1092</scope>
</reference>
<reference key="31">
    <citation type="journal article" date="1997" name="Immunity">
        <title>X-ray crystal structure of HLA-DR4 (DRA*0101, DRB1*0401) complexed with a peptide from human collagen II.</title>
        <authorList>
            <person name="Dessen A."/>
            <person name="Lawrence C.M."/>
            <person name="Cupo S."/>
            <person name="Zaller D.M."/>
            <person name="Wiley D.C."/>
        </authorList>
    </citation>
    <scope>X-RAY CRYSTALLOGRAPHY (2.5 ANGSTROMS) OF 1238-1247</scope>
</reference>
<reference key="32">
    <citation type="journal article" date="2004" name="J. Biol. Chem.">
        <title>Solution structure and dynamics of a prototypical chordin-like cysteine-rich repeat (von Willebrand Factor type C module) from collagen IIA.</title>
        <authorList>
            <person name="O'Leary J.M."/>
            <person name="Hamilton J.M."/>
            <person name="Deane C.M."/>
            <person name="Valeyev N.V."/>
            <person name="Sandell L.J."/>
            <person name="Downing A.K."/>
        </authorList>
    </citation>
    <scope>STRUCTURE BY NMR OF 25-162 (ISOFORM 2)</scope>
    <scope>DISULFIDE BONDS</scope>
</reference>
<reference key="33">
    <citation type="journal article" date="2015" name="Hum. Mutat.">
        <title>Novel COL2A1 variant (c.619G&gt;A, p.Gly207Arg) manifesting as a phenotype similar to progressive pseudorheumatoid dysplasia and spondyloepiphyseal dysplasia, Stanescu type.</title>
        <authorList>
            <person name="Jurgens J."/>
            <person name="Sobreira N."/>
            <person name="Modaff P."/>
            <person name="Reiser C.A."/>
            <person name="Seo S.H."/>
            <person name="Seong M.W."/>
            <person name="Park S.S."/>
            <person name="Kim O.H."/>
            <person name="Cho T.J."/>
            <person name="Pauli R.M."/>
        </authorList>
    </citation>
    <scope>INVOLVEMENT IN SEDSTN</scope>
    <scope>VARIANT SEDSTN ARG-207</scope>
</reference>
<reference key="34">
    <citation type="journal article" date="1991" name="FASEB J.">
        <title>Mutations in collagen genes: causes of rare and some common diseases in humans.</title>
        <authorList>
            <person name="Kuivaniemi H."/>
            <person name="Tromp G."/>
            <person name="Prockop D.J."/>
        </authorList>
    </citation>
    <scope>REVIEW ON VARIANTS</scope>
</reference>
<reference key="35">
    <citation type="journal article" date="1997" name="Hum. Mutat.">
        <title>Mutations in fibrillar collagens (types I, II, III, and XI), fibril-associated collagen (type IX), and network-forming collagen (type X) cause a spectrum of diseases of bone, cartilage, and blood vessels.</title>
        <authorList>
            <person name="Kuivaniemi H."/>
            <person name="Tromp G."/>
            <person name="Prockop D.J."/>
        </authorList>
    </citation>
    <scope>REVIEW ON VARIANTS</scope>
</reference>
<reference key="36">
    <citation type="journal article" date="1989" name="J. Biol. Chem.">
        <title>Glycine to serine substitution in the triple helical domain of pro-alpha 1 (II) collagen results in a lethal perinatal form of short-limbed dwarfism.</title>
        <authorList>
            <person name="Vissing H."/>
            <person name="D'Alessio M."/>
            <person name="Lee B."/>
            <person name="Ramirez F."/>
            <person name="Godfrey M."/>
            <person name="Hollister D.W."/>
        </authorList>
    </citation>
    <scope>VARIANT ACG2 SER-1143</scope>
</reference>
<reference key="37">
    <citation type="journal article" date="1990" name="Proc. Natl. Acad. Sci. U.S.A.">
        <title>Single base mutation in the type II procollagen gene (COL2A1) as a cause of primary osteoarthritis associated with a mild chondrodysplasia.</title>
        <authorList>
            <person name="Ala-Kokko L."/>
            <person name="Baldwin C.T."/>
            <person name="Moskowitz R.W."/>
            <person name="Prockop D.J."/>
        </authorList>
    </citation>
    <scope>VARIANT OSCDP CYS-719</scope>
</reference>
<reference key="38">
    <citation type="journal article" date="1991" name="J. Clin. Invest.">
        <title>Cartilage expression of a type II collagen mutation in an inherited form of osteoarthritis associated with a mild chondrodysplasia.</title>
        <authorList>
            <person name="Eyre D.R."/>
            <person name="Weis M.A."/>
            <person name="Moskowitz R.W."/>
        </authorList>
    </citation>
    <scope>VARIANT OSCDP CYS-719</scope>
</reference>
<reference key="39">
    <citation type="journal article" date="1992" name="Proc. Natl. Acad. Sci. U.S.A.">
        <title>Characterization of a type II collagen gene (COL2A1) mutation identified in cultured chondrocytes from human hypochondrogenesis.</title>
        <authorList>
            <person name="Horton W.A."/>
            <person name="Machado M.A."/>
            <person name="Ellard J."/>
            <person name="Campbell D."/>
            <person name="Bartley J."/>
            <person name="Ramirez F."/>
            <person name="Vitale E."/>
            <person name="Lee B."/>
        </authorList>
    </citation>
    <scope>VARIANT HYPOCHONDROGENESIS SER-774</scope>
</reference>
<reference key="40">
    <citation type="journal article" date="1993" name="Am. J. Hum. Genet.">
        <title>Mutation in type II procollagen (COL2A1) that substitutes aspartate for glycine alpha 1-67 and that causes cataracts and retinal detachment: evidence for molecular heterogeneity in the Wagner syndrome and the Stickler syndrome (arthro-ophthalmopathy).</title>
        <authorList>
            <person name="Koerkkoe J."/>
            <person name="Ritvaniemi P."/>
            <person name="Haataja L."/>
            <person name="Kaeaeriaeinen H."/>
            <person name="Kivirikko K.I."/>
            <person name="Prockop D.J."/>
            <person name="Ala-Kokko L."/>
        </authorList>
    </citation>
    <scope>VARIANT STL1O ASP-267</scope>
</reference>
<reference key="41">
    <citation type="journal article" date="1993" name="Am. J. Hum. Genet.">
        <title>A dominant mutation in the type II collagen gene (COL2A1) produces spondyloepimetaphyseal dysplasia (SEMD), Strudwick type.</title>
        <authorList>
            <person name="Tiller G.E."/>
            <person name="Weis M.A."/>
            <person name="Lachman R.S."/>
            <person name="Cohn D.H."/>
            <person name="Rimoin D.L."/>
            <person name="Eyre D.R."/>
        </authorList>
    </citation>
    <scope>VARIANTS SEMDSTWK VAL-897 AND CYS-909</scope>
</reference>
<reference key="42">
    <citation type="journal article" date="1993" name="Biochem. Biophys. Res. Commun.">
        <title>Human cartilage from late stage familial osteoarthritis transcribes type II collagen mRNA encoding a cysteine in position 519.</title>
        <authorList>
            <person name="Holderbaum D."/>
            <person name="Malemud C.J."/>
            <person name="Moskowitz R.W."/>
            <person name="Haqqi T.M."/>
        </authorList>
    </citation>
    <scope>VARIANT OSCDP CYS-719</scope>
</reference>
<reference key="43">
    <citation type="journal article" date="1993" name="Genomics">
        <title>A mutation in the amino-terminal end of the triple helix of type II collagen causing severe osteochondrodysplasia.</title>
        <authorList>
            <person name="Vikkula M."/>
            <person name="Ritvaniemi P."/>
            <person name="Vuorio A.F."/>
            <person name="Kaitila I."/>
            <person name="Ala-Kokko L."/>
            <person name="Peltonen L."/>
        </authorList>
    </citation>
    <scope>VARIANT SPONDYLOMETAPHYSEAL DYSPLASIA ARG-354</scope>
</reference>
<reference key="44">
    <citation type="journal article" date="1993" name="Hum. Genet.">
        <title>Spondyloepiphyseal dysplasia and precocious osteoarthritis in a family with an Arg75--&gt;Cys mutation in the procollagen type II gene (COL2A1).</title>
        <authorList>
            <person name="Williams C.J."/>
            <person name="Considine E.L."/>
            <person name="Knowlton R.G."/>
            <person name="Reginato A."/>
            <person name="Neumann G."/>
            <person name="Harrison D."/>
            <person name="Buxton P."/>
            <person name="Jimenez S.A."/>
            <person name="Prockop D.J."/>
        </authorList>
    </citation>
    <scope>VARIANT CZECHD CYS-275</scope>
</reference>
<reference key="45">
    <citation type="journal article" date="1993" name="J. Biol. Chem.">
        <title>Characterization of an arginine 789 to cysteine substitution in alpha 1 (II) collagen chains of a patient with spondyloepiphyseal dysplasia.</title>
        <authorList>
            <person name="Chan D."/>
            <person name="Taylor T.K.F."/>
            <person name="Cole W.G."/>
        </authorList>
    </citation>
    <scope>VARIANT SEDC CYS-989</scope>
</reference>
<reference key="46">
    <citation type="journal article" date="1993" name="J. Med. Genet.">
        <title>The clinical features of spondyloepiphyseal dysplasia congenita resulting from the substitution of glycine 997 by serine in the alpha 1(II) chain of type II collagen.</title>
        <authorList>
            <person name="Cole W.G."/>
            <person name="Hall R.K."/>
            <person name="Rogers J.G."/>
        </authorList>
    </citation>
    <scope>VARIANT SEDC SER-1197</scope>
</reference>
<reference key="47">
    <citation type="journal article" date="1994" name="Am. J. Hum. Genet.">
        <title>Expression, in cartilage, of a 7-amino-acid deletion in type II collagen from two unrelated individuals with Kniest dysplasia.</title>
        <authorList>
            <person name="Bogaert R."/>
            <person name="Wilkin D.J."/>
            <person name="Wilcox W.R."/>
            <person name="Lachman R.S."/>
            <person name="Rimoin D.L."/>
            <person name="Cohn D.H."/>
            <person name="Eyre D.R."/>
        </authorList>
    </citation>
    <scope>VARIANT STL1 302-ALA--LYS-308 DEL</scope>
</reference>
<reference key="48">
    <citation type="journal article" date="1994" name="Hum. Mol. Genet.">
        <title>A single amino acid substitution (G103D) in the type II collagen triple helix produces Kniest dysplasia.</title>
        <authorList>
            <person name="Wilkin D.J."/>
            <person name="Bogaert R."/>
            <person name="Lachman R.S."/>
            <person name="Rimoin D.L."/>
            <person name="Eyres D.R."/>
            <person name="Cohn D.H."/>
        </authorList>
    </citation>
    <scope>VARIANT KD ASP-303</scope>
</reference>
<reference key="49">
    <citation type="journal article" date="1994" name="Hum. Mutat.">
        <title>A single base mutation in the type II procollagen gene (COL2A1) that converts glycine alpha 1-247 to serine in a family with late-onset spondyloepiphyseal dysplasia.</title>
        <authorList>
            <person name="Ritvaniemi P."/>
            <person name="Sokolov B.P."/>
            <person name="Williams C.J."/>
            <person name="Considine W."/>
            <person name="Yurgenev L."/>
            <person name="Meerson E.M."/>
            <person name="Ala-Kokko L."/>
            <person name="Prockop D.J."/>
        </authorList>
    </citation>
    <scope>VARIANT SEDC SER-447</scope>
</reference>
<reference key="50">
    <citation type="journal article" date="1995" name="Hum. Mol. Genet.">
        <title>A radiographic, morphologic, biochemical and molecular analysis of a case of achondrogenesis type II resulting from substitution for a glycine residue (Gly691--&gt;Arg) in the type II collagen trimer.</title>
        <authorList>
            <person name="Mortier G.R."/>
            <person name="Wilkin D.J."/>
            <person name="Wilcox W.R."/>
            <person name="Rimoin D.L."/>
            <person name="Lachman R.S."/>
            <person name="Eyre D.R."/>
            <person name="Cohn D.H."/>
        </authorList>
    </citation>
    <scope>VARIANT ACG2 ARG-891</scope>
</reference>
<reference key="51">
    <citation type="journal article" date="1995" name="Hum. Mol. Genet.">
        <title>Three new point mutations in type II procollagen (COL2A1) and identification of a fourth family with the COL2A1 Arg519--&gt;Cys base substitution using conformation sensitive gel electrophoresis.</title>
        <authorList>
            <person name="Williams C.J."/>
            <person name="Rock M."/>
            <person name="Considine E.L."/>
            <person name="McCarron S."/>
            <person name="Gow P."/>
            <person name="Ladda R."/>
            <person name="McLain D."/>
            <person name="Michels V.M."/>
            <person name="Murphy W."/>
            <person name="Prockop D.J."/>
            <person name="Ganguly A."/>
        </authorList>
    </citation>
    <scope>VARIANT CZECHD CYS-275</scope>
    <scope>VARIANT SEDC SER-1176</scope>
    <scope>VARIANT OSCDP CYS-719</scope>
    <scope>VARIANT HYPOCHONDROGENESIS ARG-891</scope>
    <scope>VARIANT ACG2 ARG-1188</scope>
</reference>
<reference key="52">
    <citation type="journal article" date="1995" name="J. Biol. Chem.">
        <title>A COL2A1 mutation in achondrogenesis type II results in the replacement of type II collagen by type I and III collagens in cartilage.</title>
        <authorList>
            <person name="Chan D."/>
            <person name="Cole W.G."/>
            <person name="Chow C.W."/>
            <person name="Mundlos S."/>
            <person name="Bateman J.F."/>
        </authorList>
    </citation>
    <scope>VARIANT ACG2 SER-969</scope>
</reference>
<reference key="53">
    <citation type="journal article" date="1995" name="Nat. Genet.">
        <title>Dominant mutations in the type II collagen gene, COL2A1, produce spondyloepimetaphyseal dysplasia, Strudwick type.</title>
        <authorList>
            <person name="Tiller G.E."/>
            <person name="Polumbo P.A."/>
            <person name="Weis M.A."/>
            <person name="Bogaert R."/>
            <person name="Lachman R.S."/>
            <person name="Cohn D.H."/>
            <person name="Rimoin D.L."/>
            <person name="Eyre D.R."/>
        </authorList>
    </citation>
    <scope>VARIANTS SEMDSTWK VAL-492; CYS-504 AND CYS-909</scope>
</reference>
<reference key="54">
    <citation type="journal article" date="1996" name="Am. J. Med. Genet.">
        <title>An alpha 1(II) Gly913 to Cys substitution prevents the matrix incorporation of type II collagen which is replaced with type I and III collagens in cartilage from a patient with hypochondrogenesis.</title>
        <authorList>
            <person name="Mundlos S."/>
            <person name="Chan D."/>
            <person name="McGill J."/>
            <person name="Bateman J.F."/>
        </authorList>
    </citation>
    <scope>VARIANT HYPOCHONDROGENESIS CYS-1113</scope>
</reference>
<reference key="55">
    <citation type="journal article" date="1996" name="J. Med. Genet.">
        <title>The deletion of six amino acids at the C-terminus of the alpha 1 (II) chain causes overmodification of type II and type XI collagen: further evidence for the association between small deletions in COL2A1 and Kniest dysplasia.</title>
        <authorList>
            <person name="Winterpacht A."/>
            <person name="Superti-Furga A."/>
            <person name="Schwarze U."/>
            <person name="Stoess H."/>
            <person name="Steinmann B."/>
            <person name="Spranger J."/>
            <person name="Zabel B."/>
        </authorList>
    </citation>
    <scope>VARIANT KD 1207-PRO--GLY-1212 DEL</scope>
</reference>
<reference key="56">
    <citation type="journal article" date="1998" name="Am. J. Med. Genet.">
        <title>Stickler-like syndrome due to a dominant negative mutation in the COL2A1 gene.</title>
        <authorList>
            <person name="Ballo R."/>
            <person name="Beighton P.H."/>
            <person name="Ramesar R.S."/>
        </authorList>
    </citation>
    <scope>VARIANT EDMMD CYS-904</scope>
</reference>
<reference key="57">
    <citation type="journal article" date="1998" name="Hum. Mutat.">
        <title>Five families with arginine 519-cysteine mutation in COL2A1: evidence for three distinct founders.</title>
        <authorList>
            <person name="Bleasel J.F."/>
            <person name="Holderbaum D."/>
            <person name="Brancolini V."/>
            <person name="Moskowitz R.W."/>
            <person name="Considine E.L."/>
            <person name="Prockop D.J."/>
            <person name="Devoto M."/>
            <person name="Williams C.J."/>
        </authorList>
    </citation>
    <scope>VARIANT SPONDYLOEPIPHYSEAL DYSPLASIA CYS-719</scope>
</reference>
<reference key="58">
    <citation type="journal article" date="2000" name="Am. J. Hum. Genet.">
        <title>Variation in the vitreous phenotype of Stickler syndrome can be caused by different amino acid substitutions in the X position of the type II collagen Gly-X-Y triple helix.</title>
        <authorList>
            <person name="Richards A.J."/>
            <person name="Baguley D.M."/>
            <person name="Yates J.R.W."/>
            <person name="Lane C."/>
            <person name="Nicol M."/>
            <person name="Harper P.S."/>
            <person name="Scott J.D."/>
            <person name="Snead M.P."/>
        </authorList>
    </citation>
    <scope>VARIANT STL1 CYS-565</scope>
    <scope>VARIANT DRRD PHE-667</scope>
</reference>
<reference key="59">
    <citation type="journal article" date="2000" name="Am. J. Med. Genet.">
        <title>Boy with syndactylies, macrocephaly, and severe skeletal dysplasia: not a new syndrome, but two dominant mutations (GLI3 E543X and COL2A1 G973R) in the same individual.</title>
        <authorList>
            <person name="Sobetzko D."/>
            <person name="Eich G."/>
            <person name="Kalff-Suske M."/>
            <person name="Grzeschik K.-H."/>
            <person name="Superti-Furga A."/>
        </authorList>
    </citation>
    <scope>VARIANT SEDC ARG-1173</scope>
</reference>
<reference key="60">
    <citation type="journal article" date="2000" name="Am. J. Med. Genet.">
        <title>Widely distributed mutations in the COL2A1 gene produce achondrogenesis type II/hypochondrogenesis.</title>
        <authorList>
            <person name="Koerkkoe J."/>
            <person name="Cohn D.H."/>
            <person name="Ala-Kokko L."/>
            <person name="Krakow D."/>
            <person name="Prockop D.J."/>
        </authorList>
    </citation>
    <scope>VARIANTS ACG2 VAL-453; ASP-453; ASP-771; ARG-780; ARG-795; GLU-894; ASP-948; SER-981; VAL-1065 AND ARG-1119</scope>
    <scope>VARIANT HYPOCHONDROGENESIS 1017-GLY--VAL-1022 DEL</scope>
    <scope>VARIANT ILE-1331</scope>
</reference>
<reference key="61">
    <citation type="journal article" date="2000" name="J. Med. Genet.">
        <title>Report of five novel and one recurrent COL2A1 mutations with analysis of genotype-phenotype correlation in patients with a lethal type II collagen disorder.</title>
        <authorList>
            <person name="Mortier G.R."/>
            <person name="Weis M."/>
            <person name="Nuytinck L."/>
            <person name="King L.M."/>
            <person name="Wilkin D.J."/>
            <person name="De Paepe A."/>
            <person name="Lachman R.S."/>
            <person name="Rimoin D.L."/>
            <person name="Eyre D.R."/>
            <person name="Cohn D.H."/>
        </authorList>
    </citation>
    <scope>VARIANTS ACG2 SER-513; VAL-717; ALA-771; CYS-1110 AND SER-1143</scope>
    <scope>VARIANT PLSD-T ASN-1390</scope>
</reference>
<reference key="62">
    <citation type="journal article" date="2001" name="Am. J. Med. Genet.">
        <title>Double heterozygosity for pseudoachondroplasia and spondyloepiphyseal dysplasia congenita.</title>
        <authorList>
            <person name="Unger S."/>
            <person name="Koerkkoe J."/>
            <person name="Krakow D."/>
            <person name="Lachman R.S."/>
            <person name="Rimoin D.L."/>
            <person name="Cohn D.H."/>
        </authorList>
    </citation>
    <scope>VARIANT SEDC MET-1439</scope>
</reference>
<reference key="63">
    <citation type="journal article" date="2002" name="J. Med. Genet.">
        <title>Vitreoretinopathy with phalangeal epiphyseal dysplasia, a type II collagenopathy resulting from a novel mutation in the C-propeptide region of the molecule.</title>
        <authorList>
            <person name="Richards A.J."/>
            <person name="Morgan J."/>
            <person name="Bearcroft P.W.P."/>
            <person name="Pickering E."/>
            <person name="Owen M.J."/>
            <person name="Holmans P."/>
            <person name="Williams N."/>
            <person name="Tysoe C."/>
            <person name="Pope F.M."/>
            <person name="Snead M.P."/>
            <person name="Hughes H."/>
        </authorList>
    </citation>
    <scope>VARIANT VPED ASP-1305</scope>
</reference>
<reference key="64">
    <citation type="journal article" date="2004" name="Am. J. Med. Genet. A">
        <title>Recurrence of achondrogenesis type II within the same family: evidence for germline mosaicism.</title>
        <authorList>
            <person name="Faivre L."/>
            <person name="Le Merrer M."/>
            <person name="Douvier S."/>
            <person name="Laurent N."/>
            <person name="Thauvin-Robinet C."/>
            <person name="Rousseau T."/>
            <person name="Vereecke I."/>
            <person name="Sagot P."/>
            <person name="Delezoide A.-L."/>
            <person name="Coucke P."/>
            <person name="Mortier G."/>
        </authorList>
    </citation>
    <scope>VARIANT ACG2 ASP-516</scope>
</reference>
<reference key="65">
    <citation type="journal article" date="2004" name="Am. J. Med. Genet. A">
        <title>Spondyloperipheral dysplasia is caused by truncating mutations in the C-propeptide of COL2A1.</title>
        <authorList>
            <person name="Zankl A."/>
            <person name="Zabel B."/>
            <person name="Hilbert K."/>
            <person name="Wildhardt G."/>
            <person name="Cuenot S."/>
            <person name="Xavier B."/>
            <person name="Ha-Vinh R."/>
            <person name="Bonafe L."/>
            <person name="Spranger J."/>
            <person name="Superti-Furga A."/>
        </authorList>
    </citation>
    <scope>INVOLVEMENT IN SPONDYLOPERIPHERAL DYSPLASIA</scope>
</reference>
<reference key="66">
    <citation type="journal article" date="2004" name="J. Med. Genet.">
        <title>Identification of COL2A1 mutations in platyspondylic skeletal dysplasia, Torrance type.</title>
        <authorList>
            <person name="Nishimura G."/>
            <person name="Nakashima E."/>
            <person name="Mabuchi A."/>
            <person name="Shimamoto K."/>
            <person name="Shimamoto T."/>
            <person name="Shimao Y."/>
            <person name="Nagai T."/>
            <person name="Yamaguchi T."/>
            <person name="Kosaki R."/>
            <person name="Ohashi H."/>
            <person name="Makita Y."/>
            <person name="Ikegawa S."/>
        </authorList>
    </citation>
    <scope>VARIANT PLSD-T CYS-1391</scope>
</reference>
<reference key="67">
    <citation type="journal article" date="2005" name="Am. J. Med. Genet. A">
        <title>Dominant negative mutations in the C-propeptide of COL2A1 cause platyspondylic lethal skeletal dysplasia, torrance type, and define a novel subfamily within the type 2 collagenopathies.</title>
        <authorList>
            <person name="Zankl A."/>
            <person name="Neumann L."/>
            <person name="Ignatius J."/>
            <person name="Nikkels P."/>
            <person name="Schrander-Stumpel C."/>
            <person name="Mortier G."/>
            <person name="Omran H."/>
            <person name="Wright M."/>
            <person name="Hilbert K."/>
            <person name="Bonafe L."/>
            <person name="Spranger J."/>
            <person name="Zabel B."/>
            <person name="Superti-Furga A."/>
        </authorList>
    </citation>
    <scope>VARIANTS PLSD-T PRO-1448; HIS-1469; VAL-1484 DEL AND GLY-1485</scope>
    <scope>DISCUSSION OF VARIANT ASN-1390</scope>
</reference>
<reference key="68">
    <citation type="journal article" date="2005" name="Am. J. Med. Genet. A">
        <title>Novel amino acid substitution in the Y-position of collagen type II causes spondyloepimetaphyseal dysplasia congenita.</title>
        <authorList>
            <person name="Sulko J."/>
            <person name="Czarny-Ratajczak M."/>
            <person name="Wozniak A."/>
            <person name="Latos-Bielenska A."/>
            <person name="Kozlowski K."/>
        </authorList>
    </citation>
    <scope>VARIANT SEMDSTWK GLY-992</scope>
</reference>
<reference key="69">
    <citation type="journal article" date="2005" name="Invest. Ophthalmol. Vis. Sci.">
        <title>A novel mutation of COL2A1 resulting in dominantly inherited rhegmatogenous retinal detachment.</title>
        <authorList>
            <person name="Richards A.J."/>
            <person name="Meredith S."/>
            <person name="Poulson A."/>
            <person name="Bearcroft P."/>
            <person name="Crossland G."/>
            <person name="Baguley D.M."/>
            <person name="Scott J.D."/>
            <person name="Snead M.P."/>
        </authorList>
    </citation>
    <scope>VARIANTS DRRD ARG-318 AND PHE-667</scope>
</reference>
<reference key="70">
    <citation type="journal article" date="2005" name="N. Engl. J. Med.">
        <title>Type II collagen gene variants and inherited osteonecrosis of the femoral head.</title>
        <authorList>
            <person name="Liu Y.-F."/>
            <person name="Chen W.-M."/>
            <person name="Lin Y.-F."/>
            <person name="Yang R.-C."/>
            <person name="Lin M.-W."/>
            <person name="Li L.-H."/>
            <person name="Chang Y.-H."/>
            <person name="Jou Y.-S."/>
            <person name="Lin P.-Y."/>
            <person name="Su J.-S."/>
            <person name="Huang S.-F."/>
            <person name="Hsiao K.-J."/>
            <person name="Fann C.S.J."/>
            <person name="Hwang H.-W."/>
            <person name="Chen Y.-T."/>
            <person name="Tsai S.-F."/>
        </authorList>
    </citation>
    <scope>VARIANTS ANFH1 SER-717 AND SER-1170</scope>
</reference>
<reference key="71">
    <citation type="journal article" date="2006" name="Hum. Mutat.">
        <title>High efficiency of mutation detection in type 1 stickler syndrome using a two-stage approach: vitreoretinal assessment coupled with exon sequencing for screening COL2A1.</title>
        <authorList>
            <person name="Richards A.J."/>
            <person name="Laidlaw M."/>
            <person name="Whittaker J."/>
            <person name="Treacy B."/>
            <person name="Rai H."/>
            <person name="Bearcroft P."/>
            <person name="Baguley D.M."/>
            <person name="Poulson A."/>
            <person name="Ang A."/>
            <person name="Scott J.D."/>
            <person name="Snead M.P."/>
        </authorList>
    </citation>
    <scope>INVOLVEMENT IN STL1O</scope>
</reference>
<reference key="72">
    <citation type="journal article" date="2007" name="Am. J. Med. Genet. A">
        <title>A familial case of achondrogenesis type II caused by a dominant COL2A1 mutation and 'patchy' expression in the mosaic father.</title>
        <authorList>
            <person name="Forzano F."/>
            <person name="Lituania M."/>
            <person name="Viassolo A."/>
            <person name="Superti-Furga V."/>
            <person name="Wildhardt G."/>
            <person name="Zabel B."/>
            <person name="Faravelli F."/>
        </authorList>
    </citation>
    <scope>VARIANT ACG2 VAL-547</scope>
</reference>
<reference key="73">
    <citation type="journal article" date="2007" name="Hum. Genet.">
        <title>A recurrent mutation in type II collagen gene causes Legg-Calve-Perthes disease in a Japanese family.</title>
        <authorList>
            <person name="Miyamoto Y."/>
            <person name="Matsuda T."/>
            <person name="Kitoh H."/>
            <person name="Haga N."/>
            <person name="Ohashi H."/>
            <person name="Nishimura G."/>
            <person name="Ikegawa S."/>
        </authorList>
    </citation>
    <scope>VARIANT LCPD SER-1170</scope>
</reference>
<reference key="74">
    <citation type="journal article" date="2008" name="Am. J. Med. Genet. A">
        <title>Czech dysplasia: report of a large family and further delineation of the phenotype.</title>
        <authorList>
            <person name="Tzschach A."/>
            <person name="Tinschert S."/>
            <person name="Kaminsky E."/>
            <person name="Lusga E."/>
            <person name="Mundlos S."/>
            <person name="Graul-Neumann L.M."/>
        </authorList>
    </citation>
    <scope>VARIANT CZECHD CYS-275</scope>
</reference>
<reference key="75">
    <citation type="journal article" date="2008" name="Genomics">
        <title>Natural variation in four human collagen genes across an ethnically diverse population.</title>
        <authorList>
            <person name="Chan T.F."/>
            <person name="Poon A."/>
            <person name="Basu A."/>
            <person name="Addleman N.R."/>
            <person name="Chen J."/>
            <person name="Phong A."/>
            <person name="Byers P.H."/>
            <person name="Klein T.E."/>
            <person name="Kwok P.Y."/>
        </authorList>
    </citation>
    <scope>VARIANTS SER-9; ASP-142; ILE-638; THR-1051; ILE-1331 AND SER-1405</scope>
</reference>
<reference key="76">
    <citation type="journal article" date="2008" name="Hum. Mutat.">
        <title>Missense and nonsense mutations in the alternatively-spliced exon 2 of COL2A1 cause the ocular variant of Stickler syndrome.</title>
        <authorList>
            <person name="McAlinden A."/>
            <person name="Majava M."/>
            <person name="Bishop P.N."/>
            <person name="Perveen R."/>
            <person name="Black G.C.M."/>
            <person name="Pierpont M.E."/>
            <person name="Ala-Kokko L."/>
            <person name="Maennikkoe M."/>
        </authorList>
    </citation>
    <scope>VARIANT STL1O TYR-57</scope>
</reference>
<reference key="77">
    <citation type="journal article" date="2009" name="Am. J. Med. Genet. A">
        <title>Czech dysplasia occurring in a Japanese family.</title>
        <authorList>
            <person name="Matsui Y."/>
            <person name="Michigami T."/>
            <person name="Tachikawa K."/>
            <person name="Yamazaki M."/>
            <person name="Kawabata H."/>
            <person name="Nishimura G."/>
        </authorList>
    </citation>
    <scope>VARIANT CZECHD CYS-275</scope>
</reference>
<reference key="78">
    <citation type="journal article" date="2010" name="Hum. Mutat.">
        <title>Stickler syndrome and the vitreous phenotype: mutations in COL2A1 and COL11A1.</title>
        <authorList>
            <person name="Richards A.J."/>
            <person name="McNinch A."/>
            <person name="Martin H."/>
            <person name="Oakhill K."/>
            <person name="Rai H."/>
            <person name="Waller S."/>
            <person name="Treacy B."/>
            <person name="Whittaker J."/>
            <person name="Meredith S."/>
            <person name="Poulson A."/>
            <person name="Snead M.P."/>
        </authorList>
    </citation>
    <scope>VARIANTS STL1 ASP-240; ARG-270; ASP-282; ALA-453; ARG-501; CYS-904 AND ALA-1158</scope>
</reference>
<reference key="79">
    <citation type="journal article" date="2011" name="Am. J. Med. Genet. A">
        <title>Avascular necrosis of the femoral head due to a novel C propeptide mutation in COL2A1.</title>
        <authorList>
            <person name="Kannu P."/>
            <person name="O'Rielly D.D."/>
            <person name="Hyland J.C."/>
            <person name="Kokko L.A."/>
        </authorList>
    </citation>
    <scope>VARIANT ANFH1 MET-1383</scope>
</reference>
<reference key="80">
    <citation type="journal article" date="2012" name="Hum. Mutat.">
        <title>Pseudoachondroplasia and multiple epiphyseal dysplasia: A 7-year comprehensive analysis of the known disease genes identify novel and recurrent mutations and provides an accurate assessment of their relative contribution.</title>
        <authorList>
            <person name="Jackson G.C."/>
            <person name="Mittaz-Crettol L."/>
            <person name="Taylor J.A."/>
            <person name="Mortier G.R."/>
            <person name="Spranger J."/>
            <person name="Zabel B."/>
            <person name="Le Merrer M."/>
            <person name="Cormier-Daire V."/>
            <person name="Hall C.M."/>
            <person name="Offiah A."/>
            <person name="Wright M.J."/>
            <person name="Savarirayan R."/>
            <person name="Nishimura G."/>
            <person name="Ramsden S.C."/>
            <person name="Elles R."/>
            <person name="Bonafe L."/>
            <person name="Superti-Furga A."/>
            <person name="Unger S."/>
            <person name="Zankl A."/>
            <person name="Briggs M.D."/>
        </authorList>
    </citation>
    <scope>VARIANTS VAL-1176 AND ARG-1179</scope>
</reference>
<reference key="81">
    <citation type="journal article" date="2017" name="Hum. Mutat.">
        <title>Mutations in KARS cause early-onset hearing loss and leukoencephalopathy: Potential pathogenic mechanism.</title>
        <authorList>
            <person name="Zhou X.L."/>
            <person name="He L.X."/>
            <person name="Yu L.J."/>
            <person name="Wang Y."/>
            <person name="Wang X.J."/>
            <person name="Wang E.D."/>
            <person name="Yang T."/>
        </authorList>
    </citation>
    <scope>VARIANT CYS-1459</scope>
</reference>
<organism>
    <name type="scientific">Homo sapiens</name>
    <name type="common">Human</name>
    <dbReference type="NCBI Taxonomy" id="9606"/>
    <lineage>
        <taxon>Eukaryota</taxon>
        <taxon>Metazoa</taxon>
        <taxon>Chordata</taxon>
        <taxon>Craniata</taxon>
        <taxon>Vertebrata</taxon>
        <taxon>Euteleostomi</taxon>
        <taxon>Mammalia</taxon>
        <taxon>Eutheria</taxon>
        <taxon>Euarchontoglires</taxon>
        <taxon>Primates</taxon>
        <taxon>Haplorrhini</taxon>
        <taxon>Catarrhini</taxon>
        <taxon>Hominidae</taxon>
        <taxon>Homo</taxon>
    </lineage>
</organism>
<comment type="function">
    <text>Type II collagen is specific for cartilaginous tissues. It is essential for the normal embryonic development of the skeleton, for linear growth and for the ability of cartilage to resist compressive forces.</text>
</comment>
<comment type="subunit">
    <text>Homotrimers of alpha 1(II) chains.</text>
</comment>
<comment type="interaction">
    <interactant intactId="EBI-12375799">
        <id>P02458-1</id>
    </interactant>
    <interactant intactId="EBI-718729">
        <id>P55212</id>
        <label>CASP6</label>
    </interactant>
    <organismsDiffer>false</organismsDiffer>
    <experiments>3</experiments>
</comment>
<comment type="interaction">
    <interactant intactId="EBI-12375799">
        <id>P02458-1</id>
    </interactant>
    <interactant intactId="EBI-745535">
        <id>Q8NI60</id>
        <label>COQ8A</label>
    </interactant>
    <organismsDiffer>false</organismsDiffer>
    <experiments>3</experiments>
</comment>
<comment type="interaction">
    <interactant intactId="EBI-12375799">
        <id>P02458-1</id>
    </interactant>
    <interactant intactId="EBI-348399">
        <id>P22607</id>
        <label>FGFR3</label>
    </interactant>
    <organismsDiffer>false</organismsDiffer>
    <experiments>3</experiments>
</comment>
<comment type="interaction">
    <interactant intactId="EBI-12375799">
        <id>P02458-1</id>
    </interactant>
    <interactant intactId="EBI-8285963">
        <id>Q14957</id>
        <label>GRIN2C</label>
    </interactant>
    <organismsDiffer>false</organismsDiffer>
    <experiments>3</experiments>
</comment>
<comment type="interaction">
    <interactant intactId="EBI-12375799">
        <id>P02458-1</id>
    </interactant>
    <interactant intactId="EBI-351506">
        <id>P06396</id>
        <label>GSN</label>
    </interactant>
    <organismsDiffer>false</organismsDiffer>
    <experiments>3</experiments>
</comment>
<comment type="interaction">
    <interactant intactId="EBI-12375799">
        <id>P02458-1</id>
    </interactant>
    <interactant intactId="EBI-473886">
        <id>O00291</id>
        <label>HIP1</label>
    </interactant>
    <organismsDiffer>false</organismsDiffer>
    <experiments>3</experiments>
</comment>
<comment type="interaction">
    <interactant intactId="EBI-12375799">
        <id>P02458-1</id>
    </interactant>
    <interactant intactId="EBI-751001">
        <id>Q14145</id>
        <label>KEAP1</label>
    </interactant>
    <organismsDiffer>false</organismsDiffer>
    <experiments>3</experiments>
</comment>
<comment type="interaction">
    <interactant intactId="EBI-12375799">
        <id>P02458-1</id>
    </interactant>
    <interactant intactId="EBI-21591415">
        <id>P13473-2</id>
        <label>LAMP2</label>
    </interactant>
    <organismsDiffer>false</organismsDiffer>
    <experiments>3</experiments>
</comment>
<comment type="interaction">
    <interactant intactId="EBI-12375799">
        <id>P02458-1</id>
    </interactant>
    <interactant intactId="EBI-5280197">
        <id>O75400-2</id>
        <label>PRPF40A</label>
    </interactant>
    <organismsDiffer>false</organismsDiffer>
    <experiments>3</experiments>
</comment>
<comment type="interaction">
    <interactant intactId="EBI-12375799">
        <id>P02458-1</id>
    </interactant>
    <interactant intactId="EBI-741480">
        <id>Q9UMX0</id>
        <label>UBQLN1</label>
    </interactant>
    <organismsDiffer>false</organismsDiffer>
    <experiments>3</experiments>
</comment>
<comment type="interaction">
    <interactant intactId="EBI-12375799">
        <id>P02458-1</id>
    </interactant>
    <interactant intactId="EBI-25900580">
        <id>Q9Y649</id>
    </interactant>
    <organismsDiffer>false</organismsDiffer>
    <experiments>3</experiments>
</comment>
<comment type="subcellular location">
    <subcellularLocation>
        <location evidence="5">Secreted</location>
        <location evidence="5">Extracellular space</location>
        <location evidence="5">Extracellular matrix</location>
    </subcellularLocation>
</comment>
<comment type="alternative products">
    <event type="alternative splicing"/>
    <isoform>
        <id>P02458-2</id>
        <name>2</name>
        <sequence type="displayed"/>
    </isoform>
    <isoform>
        <id>P02458-1</id>
        <name>1</name>
        <sequence type="described" ref="VSP_022366"/>
    </isoform>
    <isoform>
        <id>P02458-3</id>
        <name>3</name>
        <sequence type="described" ref="VSP_022365"/>
    </isoform>
</comment>
<comment type="tissue specificity">
    <text evidence="36">Isoform 2 is highly expressed in juvenile chondrocyte and low in fetal chondrocyte.</text>
</comment>
<comment type="domain">
    <text evidence="1">The C-terminal propeptide, also known as COLFI domain, have crucial roles in tissue growth and repair by controlling both the intracellular assembly of procollagen molecules and the extracellular assembly of collagen fibrils. It binds a calcium ion which is essential for its function (By similarity).</text>
</comment>
<comment type="PTM">
    <text>The N-telopeptide is covalently linked to the helical COL2 region of alpha 1(IX), alpha 2(IX) and alpha 3(IX) chain. The C-telopeptide is covalently linked to an another site in the helical region of alpha 3(IX) COL2.</text>
</comment>
<comment type="PTM">
    <text evidence="2">Contains mostly 4-hydroxyproline. Prolines at the third position of the tripeptide repeating unit (G-X-P) are 4-hydroxylated in some or all of the chains.</text>
</comment>
<comment type="PTM">
    <text evidence="2">Contains 3-hydroxyproline at a few sites. This modification occurs on the first proline residue in the sequence motif Gly-Pro-Hyp, where Hyp is 4-hydroxyproline.</text>
</comment>
<comment type="PTM">
    <text evidence="2">Lysine residues at the third position of the tripeptide repeating unit (G-X-Y) are 5-hydroxylated in some or all of the chains.</text>
</comment>
<comment type="PTM">
    <text evidence="2">O-glycosylated on hydroxylated lysine residues. The O-linked glycan consists of a Glc-Gal disaccharide.</text>
</comment>
<comment type="disease" evidence="7 11 35 38 48 52 55 56">
    <disease id="DI-02333">
        <name>Spondyloepiphyseal dysplasia congenital type</name>
        <acronym>SEDC</acronym>
        <description>Disorder characterized by disproportionate short stature and pleiotropic involvement of the skeletal and ocular systems.</description>
        <dbReference type="MIM" id="183900"/>
    </disease>
    <text>The disease is caused by variants affecting the gene represented in this entry.</text>
</comment>
<comment type="disease" evidence="41">
    <disease id="DI-04552">
        <name>Spondyloepiphyseal dysplasia, Stanescu type</name>
        <acronym>SEDSTN</acronym>
        <description>An autosomal dominant spondyloepiphyseal dysplasia characterized by glycoproteins accumulation in chondrocytes. Clinical features include progressive joint contractures, premature degenerative joint disease particularly in the knee, hip and finger joints, and osseous distention of the metaphyseal ends of the phalanges causing swolling of interphalangeal joints of the hands. Radiological features include generalized platyspondyly, hypoplastic pelvis, epiphyseal flattening with metaphyseal splaying of the long bones, and enlarged phalangeal epimetaphyses of the hands.</description>
        <dbReference type="MIM" id="616583"/>
    </disease>
    <text>The disease is caused by variants affecting the gene represented in this entry.</text>
</comment>
<comment type="disease" evidence="21 46 64">
    <disease id="DI-02343">
        <name>Spondyloepimetaphyseal dysplasia, Strudwick type</name>
        <acronym>SEMDSTWK</acronym>
        <description>A bone disease characterized by disproportionate short stature from birth, with a very short trunk and shortened limbs, and skeletal abnormalities including lordosis, scoliosis, flattened vertebrae, pectus carinatum, coxa vara, clubfoot, and abnormal epiphyses or metaphyses. A distinctive radiographic feature is irregular sclerotic changes, described as dappled in the metaphyses of the long bones.</description>
        <dbReference type="MIM" id="184250"/>
    </disease>
    <text>The disease is caused by variants affecting the gene represented in this entry.</text>
</comment>
<comment type="disease" evidence="8 9 16 25 39 47 48 49">
    <disease id="DI-00020">
        <name>Achondrogenesis 2</name>
        <acronym>ACG2</acronym>
        <description>An autosomal dominant disease characterized by the absence of ossification in the vertebral column, sacrum and pubic bones.</description>
        <dbReference type="MIM" id="200610"/>
    </disease>
    <text>The disease is caused by variants affecting the gene represented in this entry.</text>
</comment>
<comment type="disease" evidence="23">
    <disease id="DI-01885">
        <name>Legg-Calve-Perthes disease</name>
        <acronym>LCPD</acronym>
        <description>Characterized by loss of circulation to the femoral head, resulting in avascular necrosis in a growing child. Clinical pictures of the disease vary, depending on the phase of disease progression through ischemia, revascularization, fracture and collapse, and repair and remodeling of the bone.</description>
        <dbReference type="MIM" id="150600"/>
    </disease>
    <text>The disease is caused by variants affecting the gene represented in this entry.</text>
</comment>
<comment type="disease" evidence="50 60">
    <disease id="DI-01867">
        <name>Kniest dysplasia</name>
        <acronym>KD</acronym>
        <description>Moderately severe chondrodysplasia phenotype that results from mutations in the COL2A1 gene. Characteristics of the disorder include a short trunk and extremities, mid-face hypoplasia, cleft palate, myopia, retinal detachment, and hearing loss.</description>
        <dbReference type="MIM" id="156550"/>
    </disease>
    <text>The disease is caused by variants affecting the gene represented in this entry.</text>
</comment>
<comment type="disease" evidence="20 33">
    <disease id="DI-02197">
        <name>Avascular necrosis of femoral head, primary, 1</name>
        <acronym>ANFH1</acronym>
        <description>A disease characterized by mechanical failure of the subchondral bone, and degeneration of the hip joint. It usually leads to destruction of the hip joint in the third to fifth decade of life. The clinical manifestations, such as pain on exertion, a limping gait, and a discrepancy in leg length, cause considerable disability. ANFH1 inheritance is autosomal dominant.</description>
        <dbReference type="MIM" id="608805"/>
    </disease>
    <text>The disease is caused by variants affecting the gene represented in this entry.</text>
</comment>
<comment type="disease" evidence="28 30 48 58">
    <disease id="DI-02101">
        <name>Osteoarthritis with mild chondrodysplasia</name>
        <acronym>OSCDP</acronym>
        <description>Osteoarthritis is a common disease that produces joint pain and stiffness together with radiologic evidence of progressive degeneration of joint cartilage.</description>
        <dbReference type="MIM" id="604864"/>
    </disease>
    <text>The disease is caused by variants affecting the gene represented in this entry.</text>
</comment>
<comment type="disease" evidence="8 15 18">
    <disease id="DI-02173">
        <name>Platyspondylic lethal skeletal dysplasia Torrance type</name>
        <acronym>PLSD-T</acronym>
        <description>Platyspondylic lethal skeletal dysplasias (PLSDs) are a heterogeneous group of chondrodysplasias characterized by severe platyspondyly and limb shortening. PLSD-T is characterized by varying platyspondyly, short ribs with anterior cupping, hypoplasia of the lower ilia with broad ischial and pubic bones, and shortening of the tubular bones with splayed and cupped metaphyses. Histology of the growth plate typically shows focal hypercellularity with slightly enlarged chondrocytes in the resting cartilage and relatively well-preserved columnar formation and ossification at the chondro-osseous junction. PLSD-T is generally a perinatally lethal disease, but a few long-term survivors have been reported.</description>
        <dbReference type="MIM" id="151210"/>
    </disease>
    <text>The disease is caused by variants affecting the gene represented in this entry.</text>
</comment>
<comment type="disease" evidence="63">
    <disease id="DI-00790">
        <name>Multiple epiphyseal dysplasia with myopia and conductive deafness</name>
        <acronym>EDMMD</acronym>
        <description>A generalized skeletal dysplasia associated with significant morbidity. Joint pain, joint deformity, waddling gait, and short stature are the main clinical signs and symptoms. EDMMD is an autosomal dominant disorder characterized by epiphyseal dysplasia associated with progressive myopia, retinal thinning, crenated cataracts, conductive deafness.</description>
        <dbReference type="MIM" id="132450"/>
    </disease>
    <text>The disease is caused by variants affecting the gene represented in this entry.</text>
</comment>
<comment type="disease" evidence="17">
    <disease id="DI-02337">
        <name>Spondyloperipheral dysplasia</name>
        <acronym>SPD</acronym>
        <description>SPD patients manifest short stature, midface hypoplasia, sensorineural hearing loss, spondyloepiphyseal dysplasia, platyspondyly and brachydactyly.</description>
        <dbReference type="MIM" id="271700"/>
    </disease>
    <text>The disease is caused by variants affecting the gene represented in this entry.</text>
</comment>
<comment type="disease" evidence="10 31 51">
    <disease id="DI-01090">
        <name>Stickler syndrome 1</name>
        <acronym>STL1</acronym>
        <description>An autosomal dominant form of Stickler syndrome, an inherited disorder that associates ocular signs with more or less complete forms of Pierre Robin sequence, bone disorders and sensorineural deafness. Ocular disorders may include juvenile cataract, myopia, strabismus, vitreoretinal or chorioretinal degeneration, retinal detachment, and chronic uveitis. Pierre Robin sequence includes an opening in the roof of the mouth (a cleft palate), a large tongue (macroglossia), and a small lower jaw (micrognathia). Bones are affected by slight platyspondylisis and large, often defective epiphyses. Juvenile joint laxity is followed by early signs of arthrosis. The degree of hearing loss varies among affected individuals and may become more severe over time. Syndrome expressivity is variable.</description>
        <dbReference type="MIM" id="108300"/>
    </disease>
    <text>The disease is caused by variants affecting the gene represented in this entry.</text>
</comment>
<comment type="disease" evidence="22 24 54">
    <disease id="DI-01091">
        <name>Stickler syndrome 1 non-syndromic ocular</name>
        <acronym>STL1O</acronym>
        <description>An autosomal dominant form of Stickler syndrome characterized by the ocular signs typically seen in Stickler syndrome type 1 such as cataract, myopia, retinal detachment. Systemic features of premature osteoarthritis, cleft palate, hearing impairment, and craniofacial abnormalities are either absent or very mild.</description>
        <dbReference type="MIM" id="609508"/>
    </disease>
    <text>The disease is caused by variants affecting the gene represented in this entry.</text>
</comment>
<comment type="disease" evidence="10 19">
    <disease id="DI-01000">
        <name>Rhegmatogenous retinal detachment autosomal dominant</name>
        <acronym>DRRD</acronym>
        <description>A eye disease that most frequently results from a break or tear in the retina that allows fluid from the vitreous humor to enter the potential space beneath the retina. It is often associated with pathologic myopia and in most cases leads to visual impairment or blindness if untreated.</description>
        <dbReference type="MIM" id="609508"/>
    </disease>
    <text>The disease is caused by variants affecting the gene represented in this entry.</text>
</comment>
<comment type="disease" evidence="27 29 48 53">
    <disease id="DI-03158">
        <name>Czech dysplasia</name>
        <acronym>CZECHD</acronym>
        <description>A skeletal dysplasia characterized by early-onset, progressive pseudorheumatoid arthritis, platyspondyly, and short third and fourth toes.</description>
        <dbReference type="MIM" id="609162"/>
    </disease>
    <text>The disease is caused by variants affecting the gene represented in this entry.</text>
</comment>
<comment type="disease" evidence="12">
    <disease id="DI-06065">
        <name>Vitreoretinopathy with phalangeal epiphyseal dysplasia</name>
        <acronym>VPED</acronym>
        <description>An autosomal dominant disorder characterized by rhegmatogenous retinal detachment, premature arthropathy, and development of phalangeal epiphyseal dysplasia resulting in brachydactyly.</description>
        <dbReference type="MIM" id="619248"/>
    </disease>
    <text>The disease is caused by variants affecting the gene represented in this entry.</text>
</comment>
<comment type="disease" evidence="37 45">
    <disease id="DI-06991">
        <name>Spondylometaphyseal dysplasia, Algerian type</name>
        <acronym>SMDALG</acronym>
        <description>A form of spondylometaphyseal dysplasia, a group of short stature disorders distinguished by abnormalities in the vertebrae and the metaphyses of the tubular bones. SMDALG is an autosomal dominant form characterized by short trunk and severe genu valgum. Myopia may be a syndromic component. SMDALG radiological hallmarks include moderate platyspondyly, particularly with dorsal vertebral flattening, short ilia with narrow greater sciatic notches and generalized metaphyseal dysplasia of the long bones. The metaphyseal changes are most conspicuous in the hip and knee, and are associated with coxa vara and severe genu valgum. The short tubular bones are mildly affected. The epiphyses of the tubular bones are said to be normal.</description>
        <dbReference type="MIM" id="184253"/>
    </disease>
    <text>The disease may be caused by variants affecting the gene represented in this entry.</text>
</comment>
<comment type="similarity">
    <text evidence="5">Belongs to the fibrillar collagen family.</text>
</comment>
<comment type="sequence caution" evidence="69">
    <conflict type="frameshift">
        <sequence resource="EMBL-CDS" id="AAH07252"/>
    </conflict>
</comment>
<accession>P02458</accession>
<accession>A6NGA0</accession>
<accession>Q12985</accession>
<accession>Q14009</accession>
<accession>Q14044</accession>
<accession>Q14045</accession>
<accession>Q14046</accession>
<accession>Q14047</accession>
<accession>Q14056</accession>
<accession>Q14058</accession>
<accession>Q16672</accession>
<accession>Q1JQ82</accession>
<accession>Q2V4X7</accession>
<accession>Q6LBY1</accession>
<accession>Q6LBY2</accession>
<accession>Q6LBY3</accession>
<accession>Q96IT5</accession>
<accession>Q99227</accession>
<accession>Q9UE38</accession>
<accession>Q9UE39</accession>
<accession>Q9UE40</accession>
<accession>Q9UE41</accession>
<accession>Q9UE42</accession>
<accession>Q9UE43</accession>
<evidence type="ECO:0000250" key="1"/>
<evidence type="ECO:0000250" key="2">
    <source>
        <dbReference type="UniProtKB" id="P05539"/>
    </source>
</evidence>
<evidence type="ECO:0000255" key="3"/>
<evidence type="ECO:0000255" key="4">
    <source>
        <dbReference type="PROSITE-ProRule" id="PRU00220"/>
    </source>
</evidence>
<evidence type="ECO:0000255" key="5">
    <source>
        <dbReference type="PROSITE-ProRule" id="PRU00793"/>
    </source>
</evidence>
<evidence type="ECO:0000256" key="6">
    <source>
        <dbReference type="SAM" id="MobiDB-lite"/>
    </source>
</evidence>
<evidence type="ECO:0000269" key="7">
    <source>
    </source>
</evidence>
<evidence type="ECO:0000269" key="8">
    <source>
    </source>
</evidence>
<evidence type="ECO:0000269" key="9">
    <source>
    </source>
</evidence>
<evidence type="ECO:0000269" key="10">
    <source>
    </source>
</evidence>
<evidence type="ECO:0000269" key="11">
    <source>
    </source>
</evidence>
<evidence type="ECO:0000269" key="12">
    <source>
    </source>
</evidence>
<evidence type="ECO:0000269" key="13">
    <source>
    </source>
</evidence>
<evidence type="ECO:0000269" key="14">
    <source>
    </source>
</evidence>
<evidence type="ECO:0000269" key="15">
    <source>
    </source>
</evidence>
<evidence type="ECO:0000269" key="16">
    <source>
    </source>
</evidence>
<evidence type="ECO:0000269" key="17">
    <source>
    </source>
</evidence>
<evidence type="ECO:0000269" key="18">
    <source>
    </source>
</evidence>
<evidence type="ECO:0000269" key="19">
    <source>
    </source>
</evidence>
<evidence type="ECO:0000269" key="20">
    <source>
    </source>
</evidence>
<evidence type="ECO:0000269" key="21">
    <source>
    </source>
</evidence>
<evidence type="ECO:0000269" key="22">
    <source>
    </source>
</evidence>
<evidence type="ECO:0000269" key="23">
    <source>
    </source>
</evidence>
<evidence type="ECO:0000269" key="24">
    <source>
    </source>
</evidence>
<evidence type="ECO:0000269" key="25">
    <source>
    </source>
</evidence>
<evidence type="ECO:0000269" key="26">
    <source>
    </source>
</evidence>
<evidence type="ECO:0000269" key="27">
    <source>
    </source>
</evidence>
<evidence type="ECO:0000269" key="28">
    <source>
    </source>
</evidence>
<evidence type="ECO:0000269" key="29">
    <source>
    </source>
</evidence>
<evidence type="ECO:0000269" key="30">
    <source>
    </source>
</evidence>
<evidence type="ECO:0000269" key="31">
    <source>
    </source>
</evidence>
<evidence type="ECO:0000269" key="32">
    <source>
    </source>
</evidence>
<evidence type="ECO:0000269" key="33">
    <source>
    </source>
</evidence>
<evidence type="ECO:0000269" key="34">
    <source>
    </source>
</evidence>
<evidence type="ECO:0000269" key="35">
    <source>
    </source>
</evidence>
<evidence type="ECO:0000269" key="36">
    <source>
    </source>
</evidence>
<evidence type="ECO:0000269" key="37">
    <source>
    </source>
</evidence>
<evidence type="ECO:0000269" key="38">
    <source>
    </source>
</evidence>
<evidence type="ECO:0000269" key="39">
    <source>
    </source>
</evidence>
<evidence type="ECO:0000269" key="40">
    <source>
    </source>
</evidence>
<evidence type="ECO:0000269" key="41">
    <source>
    </source>
</evidence>
<evidence type="ECO:0000269" key="42">
    <source>
    </source>
</evidence>
<evidence type="ECO:0000269" key="43">
    <source>
    </source>
</evidence>
<evidence type="ECO:0000269" key="44">
    <source>
    </source>
</evidence>
<evidence type="ECO:0000269" key="45">
    <source>
    </source>
</evidence>
<evidence type="ECO:0000269" key="46">
    <source>
    </source>
</evidence>
<evidence type="ECO:0000269" key="47">
    <source>
    </source>
</evidence>
<evidence type="ECO:0000269" key="48">
    <source>
    </source>
</evidence>
<evidence type="ECO:0000269" key="49">
    <source>
    </source>
</evidence>
<evidence type="ECO:0000269" key="50">
    <source>
    </source>
</evidence>
<evidence type="ECO:0000269" key="51">
    <source>
    </source>
</evidence>
<evidence type="ECO:0000269" key="52">
    <source>
    </source>
</evidence>
<evidence type="ECO:0000269" key="53">
    <source>
    </source>
</evidence>
<evidence type="ECO:0000269" key="54">
    <source>
    </source>
</evidence>
<evidence type="ECO:0000269" key="55">
    <source>
    </source>
</evidence>
<evidence type="ECO:0000269" key="56">
    <source>
    </source>
</evidence>
<evidence type="ECO:0000269" key="57">
    <source>
    </source>
</evidence>
<evidence type="ECO:0000269" key="58">
    <source>
    </source>
</evidence>
<evidence type="ECO:0000269" key="59">
    <source>
    </source>
</evidence>
<evidence type="ECO:0000269" key="60">
    <source>
    </source>
</evidence>
<evidence type="ECO:0000269" key="61">
    <source>
    </source>
</evidence>
<evidence type="ECO:0000269" key="62">
    <source>
    </source>
</evidence>
<evidence type="ECO:0000269" key="63">
    <source>
    </source>
</evidence>
<evidence type="ECO:0000269" key="64">
    <source ref="41"/>
</evidence>
<evidence type="ECO:0000303" key="65">
    <source>
    </source>
</evidence>
<evidence type="ECO:0000303" key="66">
    <source>
    </source>
</evidence>
<evidence type="ECO:0000303" key="67">
    <source>
    </source>
</evidence>
<evidence type="ECO:0000303" key="68">
    <source ref="3"/>
</evidence>
<evidence type="ECO:0000305" key="69"/>
<evidence type="ECO:0000312" key="70">
    <source>
        <dbReference type="HGNC" id="HGNC:2200"/>
    </source>
</evidence>
<evidence type="ECO:0007829" key="71">
    <source>
        <dbReference type="PDB" id="5NIR"/>
    </source>
</evidence>
<evidence type="ECO:0007829" key="72">
    <source>
        <dbReference type="PDB" id="5OCX"/>
    </source>
</evidence>
<sequence length="1487" mass="141785">MIRLGAPQTLVLLTLLVAAVLRCQGQDVQEAGSCVQDGQRYNDKDVWKPEPCRICVCDTGTVLCDDIICEDVKDCLSPEIPFGECCPICPTDLATASGQPGPKGQKGEPGDIKDIVGPKGPPGPQGPAGEQGPRGDRGDKGEKGAPGPRGRDGEPGTPGNPGPPGPPGPPGPPGLGGNFAAQMAGGFDEKAGGAQLGVMQGPMGPMGPRGPPGPAGAPGPQGFQGNPGEPGEPGVSGPMGPRGPPGPPGKPGDDGEAGKPGKAGERGPPGPQGARGFPGTPGLPGVKGHRGYPGLDGAKGEAGAPGVKGESGSPGENGSPGPMGPRGLPGERGRTGPAGAAGARGNDGQPGPAGPPGPVGPAGGPGFPGAPGAKGEAGPTGARGPEGAQGPRGEPGTPGSPGPAGASGNPGTDGIPGAKGSAGAPGIAGAPGFPGPRGPPGPQGATGPLGPKGQTGEPGIAGFKGEQGPKGEPGPAGPQGAPGPAGEEGKRGARGEPGGVGPIGPPGERGAPGNRGFPGQDGLAGPKGAPGERGPSGLAGPKGANGDPGRPGEPGLPGARGLTGRPGDAGPQGKVGPSGAPGEDGRPGPPGPQGARGQPGVMGFPGPKGANGEPGKAGEKGLPGAPGLRGLPGKDGETGAAGPPGPAGPAGERGEQGAPGPSGFQGLPGPPGPPGEGGKPGDQGVPGEAGAPGLVGPRGERGFPGERGSPGAQGLQGPRGLPGTPGTDGPKGASGPAGPPGAQGPPGLQGMPGERGAAGIAGPKGDRGDVGEKGPEGAPGKDGGRGLTGPIGPPGPAGANGEKGEVGPPGPAGSAGARGAPGERGETGPPGPAGFAGPPGADGQPGAKGEQGEAGQKGDAGAPGPQGPSGAPGPQGPTGVTGPKGARGAQGPPGATGFPGAAGRVGPPGSNGNPGPPGPPGPSGKDGPKGARGDSGPPGRAGEPGLQGPAGPPGEKGEPGDDGPSGAEGPPGPQGLAGQRGIVGLPGQRGERGFPGLPGPSGEPGKQGAPGASGDRGPPGPVGPPGLTGPAGEPGREGSPGADGPPGRDGAAGVKGDRGETGAVGAPGAPGPPGSPGPAGPTGKQGDRGEAGAQGPMGPSGPAGARGIQGPQGPRGDKGEAGEPGERGLKGHRGFTGLQGLPGPPGPSGDQGASGPAGPSGPRGPPGPVGPSGKDGANGIPGPIGPPGPRGRSGETGPAGPPGNPGPPGPPGPPGPGIDMSAFAGLGPREKGPDPLQYMRADQAAGGLRQHDAEVDATLKSLNNQIESIRSPEGSRKNPARTCRDLKLCHPEWKSGDYWIDPNQGCTLDAMKVFCNMETGETCVYPNPANVPKKNWWSSKSKEKKHIWFGETINGGFHFSYGDDNLAPNTANVQMTFLRLLSTEGSQNITYHCKNSIAYLDEAAGNLKKALLIQGSNDVEIRAEGNSRFTYTALKDGCTKHTGKWGKTVIEYRSQKTSRLPIIDIAPMDIGGPEQEFGVDIGPVCFL</sequence>
<dbReference type="EMBL" id="X16468">
    <property type="protein sequence ID" value="CAA34488.1"/>
    <property type="molecule type" value="mRNA"/>
</dbReference>
<dbReference type="EMBL" id="L10347">
    <property type="protein sequence ID" value="AAC41772.1"/>
    <property type="molecule type" value="Genomic_DNA"/>
</dbReference>
<dbReference type="EMBL" id="BT007205">
    <property type="protein sequence ID" value="AAP35869.1"/>
    <property type="molecule type" value="mRNA"/>
</dbReference>
<dbReference type="EMBL" id="AC004801">
    <property type="status" value="NOT_ANNOTATED_CDS"/>
    <property type="molecule type" value="Genomic_DNA"/>
</dbReference>
<dbReference type="EMBL" id="BC007252">
    <property type="protein sequence ID" value="AAH07252.1"/>
    <property type="status" value="ALT_FRAME"/>
    <property type="molecule type" value="mRNA"/>
</dbReference>
<dbReference type="EMBL" id="BC116449">
    <property type="protein sequence ID" value="AAI16450.1"/>
    <property type="molecule type" value="mRNA"/>
</dbReference>
<dbReference type="EMBL" id="X16711">
    <property type="protein sequence ID" value="CAA34683.1"/>
    <property type="molecule type" value="mRNA"/>
</dbReference>
<dbReference type="EMBL" id="M25730">
    <property type="protein sequence ID" value="AAA58428.2"/>
    <property type="molecule type" value="Genomic_DNA"/>
</dbReference>
<dbReference type="EMBL" id="M32168">
    <property type="protein sequence ID" value="AAA58428.2"/>
    <property type="status" value="JOINED"/>
    <property type="molecule type" value="Genomic_DNA"/>
</dbReference>
<dbReference type="EMBL" id="M25655">
    <property type="protein sequence ID" value="AAA58428.2"/>
    <property type="status" value="JOINED"/>
    <property type="molecule type" value="Genomic_DNA"/>
</dbReference>
<dbReference type="EMBL" id="M25656">
    <property type="protein sequence ID" value="AAA58428.2"/>
    <property type="status" value="JOINED"/>
    <property type="molecule type" value="Genomic_DNA"/>
</dbReference>
<dbReference type="EMBL" id="M64345">
    <property type="protein sequence ID" value="AAA58428.2"/>
    <property type="status" value="JOINED"/>
    <property type="molecule type" value="Genomic_DNA"/>
</dbReference>
<dbReference type="EMBL" id="M60299">
    <property type="protein sequence ID" value="AAA73873.1"/>
    <property type="molecule type" value="Genomic_DNA"/>
</dbReference>
<dbReference type="EMBL" id="M25698">
    <property type="protein sequence ID" value="AAA52051.1"/>
    <property type="molecule type" value="Genomic_DNA"/>
</dbReference>
<dbReference type="EMBL" id="X58709">
    <property type="status" value="NOT_ANNOTATED_CDS"/>
    <property type="molecule type" value="Genomic_DNA"/>
</dbReference>
<dbReference type="EMBL" id="X57010">
    <property type="protein sequence ID" value="CAA40330.1"/>
    <property type="molecule type" value="Genomic_DNA"/>
</dbReference>
<dbReference type="EMBL" id="U15195">
    <property type="protein sequence ID" value="AAB60370.1"/>
    <property type="molecule type" value="Genomic_DNA"/>
</dbReference>
<dbReference type="EMBL" id="X13783">
    <property type="protein sequence ID" value="CAA32030.1"/>
    <property type="molecule type" value="mRNA"/>
</dbReference>
<dbReference type="EMBL" id="M25728">
    <property type="protein sequence ID" value="AAD15287.1"/>
    <property type="molecule type" value="Genomic_DNA"/>
</dbReference>
<dbReference type="EMBL" id="X02371">
    <property type="protein sequence ID" value="CAA26223.1"/>
    <property type="molecule type" value="Genomic_DNA"/>
</dbReference>
<dbReference type="EMBL" id="X02372">
    <property type="protein sequence ID" value="CAA26223.1"/>
    <property type="status" value="JOINED"/>
    <property type="molecule type" value="Genomic_DNA"/>
</dbReference>
<dbReference type="EMBL" id="X02373">
    <property type="protein sequence ID" value="CAA26223.1"/>
    <property type="status" value="JOINED"/>
    <property type="molecule type" value="Genomic_DNA"/>
</dbReference>
<dbReference type="EMBL" id="X02374">
    <property type="protein sequence ID" value="CAA26223.1"/>
    <property type="status" value="JOINED"/>
    <property type="molecule type" value="Genomic_DNA"/>
</dbReference>
<dbReference type="EMBL" id="X02375">
    <property type="protein sequence ID" value="CAA26224.1"/>
    <property type="molecule type" value="Genomic_DNA"/>
</dbReference>
<dbReference type="EMBL" id="X02376">
    <property type="protein sequence ID" value="CAA26225.1"/>
    <property type="molecule type" value="Genomic_DNA"/>
</dbReference>
<dbReference type="EMBL" id="X02377">
    <property type="protein sequence ID" value="CAA26226.1"/>
    <property type="molecule type" value="Genomic_DNA"/>
</dbReference>
<dbReference type="EMBL" id="X02378">
    <property type="protein sequence ID" value="CAA26227.1"/>
    <property type="molecule type" value="Genomic_DNA"/>
</dbReference>
<dbReference type="EMBL" id="X16158">
    <property type="protein sequence ID" value="CAA34278.1"/>
    <property type="molecule type" value="Genomic_DNA"/>
</dbReference>
<dbReference type="EMBL" id="X16158">
    <property type="protein sequence ID" value="CAA34279.1"/>
    <property type="molecule type" value="Genomic_DNA"/>
</dbReference>
<dbReference type="EMBL" id="X16158">
    <property type="protein sequence ID" value="CAA34280.1"/>
    <property type="molecule type" value="Genomic_DNA"/>
</dbReference>
<dbReference type="EMBL" id="X16158">
    <property type="protein sequence ID" value="CAA34281.1"/>
    <property type="molecule type" value="Genomic_DNA"/>
</dbReference>
<dbReference type="EMBL" id="X16158">
    <property type="protein sequence ID" value="CAA34282.1"/>
    <property type="molecule type" value="Genomic_DNA"/>
</dbReference>
<dbReference type="EMBL" id="X16158">
    <property type="protein sequence ID" value="CAA34283.1"/>
    <property type="molecule type" value="Genomic_DNA"/>
</dbReference>
<dbReference type="EMBL" id="X16158">
    <property type="protein sequence ID" value="CAA34284.1"/>
    <property type="molecule type" value="Genomic_DNA"/>
</dbReference>
<dbReference type="EMBL" id="J00116">
    <property type="protein sequence ID" value="AAA51997.1"/>
    <property type="molecule type" value="Genomic_DNA"/>
</dbReference>
<dbReference type="EMBL" id="L00977">
    <property type="status" value="NOT_ANNOTATED_CDS"/>
    <property type="molecule type" value="Genomic_DNA"/>
</dbReference>
<dbReference type="EMBL" id="M63281">
    <property type="protein sequence ID" value="AAA52038.1"/>
    <property type="molecule type" value="mRNA"/>
</dbReference>
<dbReference type="EMBL" id="M27468">
    <property type="protein sequence ID" value="AAA52039.1"/>
    <property type="molecule type" value="Genomic_DNA"/>
</dbReference>
<dbReference type="EMBL" id="X06268">
    <property type="protein sequence ID" value="CAA29604.1"/>
    <property type="molecule type" value="mRNA"/>
</dbReference>
<dbReference type="EMBL" id="X00339">
    <property type="protein sequence ID" value="CAA25092.1"/>
    <property type="molecule type" value="Genomic_DNA"/>
</dbReference>
<dbReference type="EMBL" id="M12048">
    <property type="status" value="NOT_ANNOTATED_CDS"/>
    <property type="molecule type" value="Genomic_DNA"/>
</dbReference>
<dbReference type="CCDS" id="CCDS41778.1">
    <molecule id="P02458-2"/>
</dbReference>
<dbReference type="CCDS" id="CCDS8759.1">
    <molecule id="P02458-1"/>
</dbReference>
<dbReference type="PIR" id="A38513">
    <property type="entry name" value="CGHU6C"/>
</dbReference>
<dbReference type="RefSeq" id="NP_001835.3">
    <molecule id="P02458-2"/>
    <property type="nucleotide sequence ID" value="NM_001844.4"/>
</dbReference>
<dbReference type="RefSeq" id="NP_149162.2">
    <molecule id="P02458-1"/>
    <property type="nucleotide sequence ID" value="NM_033150.3"/>
</dbReference>
<dbReference type="PDB" id="1U5M">
    <property type="method" value="NMR"/>
    <property type="chains" value="A=29-97"/>
</dbReference>
<dbReference type="PDB" id="2FSE">
    <property type="method" value="X-ray"/>
    <property type="resolution" value="3.10 A"/>
    <property type="chains" value="E/F=461-474"/>
</dbReference>
<dbReference type="PDB" id="2SEB">
    <property type="method" value="X-ray"/>
    <property type="resolution" value="2.50 A"/>
    <property type="chains" value="E=1238-1247"/>
</dbReference>
<dbReference type="PDB" id="5NIR">
    <property type="method" value="X-ray"/>
    <property type="resolution" value="1.74 A"/>
    <property type="chains" value="A/B=29-98"/>
</dbReference>
<dbReference type="PDB" id="5OCX">
    <property type="method" value="X-ray"/>
    <property type="resolution" value="1.75 A"/>
    <property type="chains" value="A=484-498"/>
</dbReference>
<dbReference type="PDB" id="5OCY">
    <property type="method" value="X-ray"/>
    <property type="resolution" value="2.60 A"/>
    <property type="chains" value="C=1120-1134"/>
</dbReference>
<dbReference type="PDB" id="6BIN">
    <property type="method" value="X-ray"/>
    <property type="resolution" value="2.50 A"/>
    <property type="chains" value="C=1237-1249"/>
</dbReference>
<dbReference type="PDB" id="6HG7">
    <property type="method" value="X-ray"/>
    <property type="resolution" value="1.00 A"/>
    <property type="chains" value="A/B/C=1116-1153"/>
</dbReference>
<dbReference type="PDB" id="6NIX">
    <property type="method" value="X-ray"/>
    <property type="resolution" value="2.10 A"/>
    <property type="chains" value="C=459-473"/>
</dbReference>
<dbReference type="PDB" id="7NZE">
    <property type="method" value="X-ray"/>
    <property type="resolution" value="2.05 A"/>
    <property type="chains" value="EEE/FFF=459-473"/>
</dbReference>
<dbReference type="PDBsum" id="1U5M"/>
<dbReference type="PDBsum" id="2FSE"/>
<dbReference type="PDBsum" id="2SEB"/>
<dbReference type="PDBsum" id="5NIR"/>
<dbReference type="PDBsum" id="5OCX"/>
<dbReference type="PDBsum" id="5OCY"/>
<dbReference type="PDBsum" id="6BIN"/>
<dbReference type="PDBsum" id="6HG7"/>
<dbReference type="PDBsum" id="6NIX"/>
<dbReference type="PDBsum" id="7NZE"/>
<dbReference type="SMR" id="P02458"/>
<dbReference type="BioGRID" id="107677">
    <property type="interactions" value="44"/>
</dbReference>
<dbReference type="ComplexPortal" id="CPX-1713">
    <property type="entry name" value="Collagen type II trimer"/>
</dbReference>
<dbReference type="ComplexPortal" id="CPX-1750">
    <property type="entry name" value="Collagen type XI trimer variant 1"/>
</dbReference>
<dbReference type="FunCoup" id="P02458">
    <property type="interactions" value="675"/>
</dbReference>
<dbReference type="IntAct" id="P02458">
    <property type="interactions" value="38"/>
</dbReference>
<dbReference type="MINT" id="P02458"/>
<dbReference type="STRING" id="9606.ENSP00000369889"/>
<dbReference type="BindingDB" id="P02458"/>
<dbReference type="ChEMBL" id="CHEMBL5169108"/>
<dbReference type="DrugBank" id="DB00048">
    <property type="generic name" value="Collagenase clostridium histolyticum"/>
</dbReference>
<dbReference type="GlyConnect" id="1126">
    <property type="glycosylation" value="1 N-Linked glycan (1 site)"/>
</dbReference>
<dbReference type="GlyCosmos" id="P02458">
    <property type="glycosylation" value="9 sites, 1 glycan"/>
</dbReference>
<dbReference type="GlyGen" id="P02458">
    <property type="glycosylation" value="18 sites, 5 N-linked glycans (2 sites), 1 O-linked glycan (2 sites)"/>
</dbReference>
<dbReference type="iPTMnet" id="P02458"/>
<dbReference type="PhosphoSitePlus" id="P02458"/>
<dbReference type="BioMuta" id="COL2A1"/>
<dbReference type="DMDM" id="124056489"/>
<dbReference type="jPOST" id="P02458"/>
<dbReference type="MassIVE" id="P02458"/>
<dbReference type="PaxDb" id="9606-ENSP00000369889"/>
<dbReference type="PeptideAtlas" id="P02458"/>
<dbReference type="ProteomicsDB" id="51519">
    <molecule id="P02458-2"/>
</dbReference>
<dbReference type="ProteomicsDB" id="51520">
    <molecule id="P02458-1"/>
</dbReference>
<dbReference type="ProteomicsDB" id="51521">
    <molecule id="P02458-3"/>
</dbReference>
<dbReference type="Pumba" id="P02458"/>
<dbReference type="ABCD" id="P02458">
    <property type="antibodies" value="28 sequenced antibodies"/>
</dbReference>
<dbReference type="Antibodypedia" id="3697">
    <property type="antibodies" value="784 antibodies from 41 providers"/>
</dbReference>
<dbReference type="DNASU" id="1280"/>
<dbReference type="Ensembl" id="ENST00000337299.7">
    <molecule id="P02458-1"/>
    <property type="protein sequence ID" value="ENSP00000338213.6"/>
    <property type="gene ID" value="ENSG00000139219.19"/>
</dbReference>
<dbReference type="Ensembl" id="ENST00000380518.8">
    <molecule id="P02458-2"/>
    <property type="protein sequence ID" value="ENSP00000369889.3"/>
    <property type="gene ID" value="ENSG00000139219.19"/>
</dbReference>
<dbReference type="GeneID" id="1280"/>
<dbReference type="KEGG" id="hsa:1280"/>
<dbReference type="MANE-Select" id="ENST00000380518.8">
    <property type="protein sequence ID" value="ENSP00000369889.3"/>
    <property type="RefSeq nucleotide sequence ID" value="NM_001844.5"/>
    <property type="RefSeq protein sequence ID" value="NP_001835.3"/>
</dbReference>
<dbReference type="UCSC" id="uc001rqu.4">
    <molecule id="P02458-2"/>
    <property type="organism name" value="human"/>
</dbReference>
<dbReference type="AGR" id="HGNC:2200"/>
<dbReference type="CTD" id="1280"/>
<dbReference type="DisGeNET" id="1280"/>
<dbReference type="GeneCards" id="COL2A1"/>
<dbReference type="GeneReviews" id="COL2A1"/>
<dbReference type="HGNC" id="HGNC:2200">
    <property type="gene designation" value="COL2A1"/>
</dbReference>
<dbReference type="HPA" id="ENSG00000139219">
    <property type="expression patterns" value="Group enriched (epididymis, pituitary gland, retina, stomach)"/>
</dbReference>
<dbReference type="MalaCards" id="COL2A1"/>
<dbReference type="MIM" id="108300">
    <property type="type" value="phenotype"/>
</dbReference>
<dbReference type="MIM" id="120140">
    <property type="type" value="gene"/>
</dbReference>
<dbReference type="MIM" id="132450">
    <property type="type" value="phenotype"/>
</dbReference>
<dbReference type="MIM" id="150600">
    <property type="type" value="phenotype"/>
</dbReference>
<dbReference type="MIM" id="151210">
    <property type="type" value="phenotype"/>
</dbReference>
<dbReference type="MIM" id="156550">
    <property type="type" value="phenotype"/>
</dbReference>
<dbReference type="MIM" id="183900">
    <property type="type" value="phenotype"/>
</dbReference>
<dbReference type="MIM" id="184250">
    <property type="type" value="phenotype"/>
</dbReference>
<dbReference type="MIM" id="184253">
    <property type="type" value="phenotype"/>
</dbReference>
<dbReference type="MIM" id="200610">
    <property type="type" value="phenotype"/>
</dbReference>
<dbReference type="MIM" id="271700">
    <property type="type" value="phenotype"/>
</dbReference>
<dbReference type="MIM" id="604864">
    <property type="type" value="phenotype"/>
</dbReference>
<dbReference type="MIM" id="608805">
    <property type="type" value="phenotype"/>
</dbReference>
<dbReference type="MIM" id="609162">
    <property type="type" value="phenotype"/>
</dbReference>
<dbReference type="MIM" id="609508">
    <property type="type" value="phenotype"/>
</dbReference>
<dbReference type="MIM" id="616583">
    <property type="type" value="phenotype"/>
</dbReference>
<dbReference type="MIM" id="619248">
    <property type="type" value="phenotype"/>
</dbReference>
<dbReference type="neXtProt" id="NX_P02458"/>
<dbReference type="OpenTargets" id="ENSG00000139219"/>
<dbReference type="Orphanet" id="93296">
    <property type="disease" value="Achondrogenesis type 2"/>
</dbReference>
<dbReference type="Orphanet" id="166100">
    <property type="disease" value="Autosomal dominant otospondylomegaepiphyseal dysplasia"/>
</dbReference>
<dbReference type="Orphanet" id="209867">
    <property type="disease" value="Autosomal dominant rhegmatogenous retinal detachment"/>
</dbReference>
<dbReference type="Orphanet" id="85198">
    <property type="disease" value="Dysspondyloenchondromatosis"/>
</dbReference>
<dbReference type="Orphanet" id="86820">
    <property type="disease" value="Familial avascular necrosis of femoral head"/>
</dbReference>
<dbReference type="Orphanet" id="93297">
    <property type="disease" value="Hypochondrogenesis"/>
</dbReference>
<dbReference type="Orphanet" id="485">
    <property type="disease" value="Kniest dysplasia"/>
</dbReference>
<dbReference type="Orphanet" id="2380">
    <property type="disease" value="Legg-Calve-Perthes disease"/>
</dbReference>
<dbReference type="Orphanet" id="93279">
    <property type="disease" value="Mild spondyloepiphyseal dysplasia due to COL2A1 mutation with early-onset osteoarthritis"/>
</dbReference>
<dbReference type="Orphanet" id="85166">
    <property type="disease" value="Platyspondylic dysplasia, Torrance type"/>
</dbReference>
<dbReference type="Orphanet" id="93346">
    <property type="disease" value="Spondyloepimetaphyseal dysplasia congenita, Strudwick type"/>
</dbReference>
<dbReference type="Orphanet" id="94068">
    <property type="disease" value="Spondyloepiphyseal dysplasia congenita"/>
</dbReference>
<dbReference type="Orphanet" id="137678">
    <property type="disease" value="Spondyloepiphyseal dysplasia with metatarsal shortening"/>
</dbReference>
<dbReference type="Orphanet" id="459051">
    <property type="disease" value="Spondyloepiphyseal dysplasia, Stanescu type"/>
</dbReference>
<dbReference type="Orphanet" id="93315">
    <property type="disease" value="Spondylometaphyseal dysplasia, 'corner fracture' type"/>
</dbReference>
<dbReference type="Orphanet" id="93316">
    <property type="disease" value="Spondylometaphyseal dysplasia, Schmidt type"/>
</dbReference>
<dbReference type="Orphanet" id="1856">
    <property type="disease" value="Spondyloperipheral dysplasia-short ulna syndrome"/>
</dbReference>
<dbReference type="Orphanet" id="90653">
    <property type="disease" value="Stickler syndrome type 1"/>
</dbReference>
<dbReference type="PharmGKB" id="PA26715"/>
<dbReference type="VEuPathDB" id="HostDB:ENSG00000139219"/>
<dbReference type="eggNOG" id="KOG3544">
    <property type="taxonomic scope" value="Eukaryota"/>
</dbReference>
<dbReference type="GeneTree" id="ENSGT00940000155224"/>
<dbReference type="HOGENOM" id="CLU_001074_2_3_1"/>
<dbReference type="InParanoid" id="P02458"/>
<dbReference type="OMA" id="EAGRHQH"/>
<dbReference type="OrthoDB" id="8939548at2759"/>
<dbReference type="PAN-GO" id="P02458">
    <property type="GO annotations" value="7 GO annotations based on evolutionary models"/>
</dbReference>
<dbReference type="PhylomeDB" id="P02458"/>
<dbReference type="TreeFam" id="TF344135"/>
<dbReference type="PathwayCommons" id="P02458"/>
<dbReference type="Reactome" id="R-HSA-1442490">
    <property type="pathway name" value="Collagen degradation"/>
</dbReference>
<dbReference type="Reactome" id="R-HSA-1474244">
    <property type="pathway name" value="Extracellular matrix organization"/>
</dbReference>
<dbReference type="Reactome" id="R-HSA-1650814">
    <property type="pathway name" value="Collagen biosynthesis and modifying enzymes"/>
</dbReference>
<dbReference type="Reactome" id="R-HSA-186797">
    <property type="pathway name" value="Signaling by PDGF"/>
</dbReference>
<dbReference type="Reactome" id="R-HSA-198933">
    <property type="pathway name" value="Immunoregulatory interactions between a Lymphoid and a non-Lymphoid cell"/>
</dbReference>
<dbReference type="Reactome" id="R-HSA-2022090">
    <property type="pathway name" value="Assembly of collagen fibrils and other multimeric structures"/>
</dbReference>
<dbReference type="Reactome" id="R-HSA-216083">
    <property type="pathway name" value="Integrin cell surface interactions"/>
</dbReference>
<dbReference type="Reactome" id="R-HSA-3000171">
    <property type="pathway name" value="Non-integrin membrane-ECM interactions"/>
</dbReference>
<dbReference type="Reactome" id="R-HSA-3000178">
    <property type="pathway name" value="ECM proteoglycans"/>
</dbReference>
<dbReference type="Reactome" id="R-HSA-419037">
    <property type="pathway name" value="NCAM1 interactions"/>
</dbReference>
<dbReference type="Reactome" id="R-HSA-8874081">
    <property type="pathway name" value="MET activates PTK2 signaling"/>
</dbReference>
<dbReference type="Reactome" id="R-HSA-8948216">
    <property type="pathway name" value="Collagen chain trimerization"/>
</dbReference>
<dbReference type="SignaLink" id="P02458"/>
<dbReference type="SIGNOR" id="P02458"/>
<dbReference type="BioGRID-ORCS" id="1280">
    <property type="hits" value="20 hits in 1157 CRISPR screens"/>
</dbReference>
<dbReference type="ChiTaRS" id="COL2A1">
    <property type="organism name" value="human"/>
</dbReference>
<dbReference type="EvolutionaryTrace" id="P02458"/>
<dbReference type="GeneWiki" id="Collagen,_type_II,_alpha_1"/>
<dbReference type="GenomeRNAi" id="1280"/>
<dbReference type="Pharos" id="P02458">
    <property type="development level" value="Tbio"/>
</dbReference>
<dbReference type="PRO" id="PR:P02458"/>
<dbReference type="Proteomes" id="UP000005640">
    <property type="component" value="Chromosome 12"/>
</dbReference>
<dbReference type="RNAct" id="P02458">
    <property type="molecule type" value="protein"/>
</dbReference>
<dbReference type="Bgee" id="ENSG00000139219">
    <property type="expression patterns" value="Expressed in tibia and 114 other cell types or tissues"/>
</dbReference>
<dbReference type="GO" id="GO:0005604">
    <property type="term" value="C:basement membrane"/>
    <property type="evidence" value="ECO:0007669"/>
    <property type="project" value="Ensembl"/>
</dbReference>
<dbReference type="GO" id="GO:0005585">
    <property type="term" value="C:collagen type II trimer"/>
    <property type="evidence" value="ECO:0000314"/>
    <property type="project" value="BHF-UCL"/>
</dbReference>
<dbReference type="GO" id="GO:0005592">
    <property type="term" value="C:collagen type XI trimer"/>
    <property type="evidence" value="ECO:0000303"/>
    <property type="project" value="ComplexPortal"/>
</dbReference>
<dbReference type="GO" id="GO:0062023">
    <property type="term" value="C:collagen-containing extracellular matrix"/>
    <property type="evidence" value="ECO:0007005"/>
    <property type="project" value="UniProtKB"/>
</dbReference>
<dbReference type="GO" id="GO:0005788">
    <property type="term" value="C:endoplasmic reticulum lumen"/>
    <property type="evidence" value="ECO:0000304"/>
    <property type="project" value="Reactome"/>
</dbReference>
<dbReference type="GO" id="GO:0005576">
    <property type="term" value="C:extracellular region"/>
    <property type="evidence" value="ECO:0007005"/>
    <property type="project" value="BHF-UCL"/>
</dbReference>
<dbReference type="GO" id="GO:0005615">
    <property type="term" value="C:extracellular space"/>
    <property type="evidence" value="ECO:0000315"/>
    <property type="project" value="UniProtKB"/>
</dbReference>
<dbReference type="GO" id="GO:0030020">
    <property type="term" value="F:extracellular matrix structural constituent conferring tensile strength"/>
    <property type="evidence" value="ECO:0007005"/>
    <property type="project" value="BHF-UCL"/>
</dbReference>
<dbReference type="GO" id="GO:0046872">
    <property type="term" value="F:metal ion binding"/>
    <property type="evidence" value="ECO:0007669"/>
    <property type="project" value="UniProtKB-KW"/>
</dbReference>
<dbReference type="GO" id="GO:0042289">
    <property type="term" value="F:MHC class II protein binding"/>
    <property type="evidence" value="ECO:0000353"/>
    <property type="project" value="CAFA"/>
</dbReference>
<dbReference type="GO" id="GO:0048407">
    <property type="term" value="F:platelet-derived growth factor binding"/>
    <property type="evidence" value="ECO:0000314"/>
    <property type="project" value="MGI"/>
</dbReference>
<dbReference type="GO" id="GO:0042803">
    <property type="term" value="F:protein homodimerization activity"/>
    <property type="evidence" value="ECO:0000353"/>
    <property type="project" value="BHF-UCL"/>
</dbReference>
<dbReference type="GO" id="GO:0043394">
    <property type="term" value="F:proteoglycan binding"/>
    <property type="evidence" value="ECO:0000314"/>
    <property type="project" value="MGI"/>
</dbReference>
<dbReference type="GO" id="GO:0097065">
    <property type="term" value="P:anterior head development"/>
    <property type="evidence" value="ECO:0007669"/>
    <property type="project" value="Ensembl"/>
</dbReference>
<dbReference type="GO" id="GO:0001502">
    <property type="term" value="P:cartilage condensation"/>
    <property type="evidence" value="ECO:0007669"/>
    <property type="project" value="Ensembl"/>
</dbReference>
<dbReference type="GO" id="GO:0051216">
    <property type="term" value="P:cartilage development"/>
    <property type="evidence" value="ECO:0000304"/>
    <property type="project" value="BHF-UCL"/>
</dbReference>
<dbReference type="GO" id="GO:0060351">
    <property type="term" value="P:cartilage development involved in endochondral bone morphogenesis"/>
    <property type="evidence" value="ECO:0007669"/>
    <property type="project" value="Ensembl"/>
</dbReference>
<dbReference type="GO" id="GO:0071773">
    <property type="term" value="P:cellular response to BMP stimulus"/>
    <property type="evidence" value="ECO:0007669"/>
    <property type="project" value="Ensembl"/>
</dbReference>
<dbReference type="GO" id="GO:0007417">
    <property type="term" value="P:central nervous system development"/>
    <property type="evidence" value="ECO:0007669"/>
    <property type="project" value="Ensembl"/>
</dbReference>
<dbReference type="GO" id="GO:0002062">
    <property type="term" value="P:chondrocyte differentiation"/>
    <property type="evidence" value="ECO:0007669"/>
    <property type="project" value="Ensembl"/>
</dbReference>
<dbReference type="GO" id="GO:0030199">
    <property type="term" value="P:collagen fibril organization"/>
    <property type="evidence" value="ECO:0000315"/>
    <property type="project" value="BHF-UCL"/>
</dbReference>
<dbReference type="GO" id="GO:0060272">
    <property type="term" value="P:embryonic skeletal joint morphogenesis"/>
    <property type="evidence" value="ECO:0000315"/>
    <property type="project" value="BHF-UCL"/>
</dbReference>
<dbReference type="GO" id="GO:0001958">
    <property type="term" value="P:endochondral ossification"/>
    <property type="evidence" value="ECO:0007669"/>
    <property type="project" value="Ensembl"/>
</dbReference>
<dbReference type="GO" id="GO:0097192">
    <property type="term" value="P:extrinsic apoptotic signaling pathway in absence of ligand"/>
    <property type="evidence" value="ECO:0007669"/>
    <property type="project" value="Ensembl"/>
</dbReference>
<dbReference type="GO" id="GO:0003007">
    <property type="term" value="P:heart morphogenesis"/>
    <property type="evidence" value="ECO:0007669"/>
    <property type="project" value="Ensembl"/>
</dbReference>
<dbReference type="GO" id="GO:0042472">
    <property type="term" value="P:inner ear morphogenesis"/>
    <property type="evidence" value="ECO:0007669"/>
    <property type="project" value="Ensembl"/>
</dbReference>
<dbReference type="GO" id="GO:0060174">
    <property type="term" value="P:limb bud formation"/>
    <property type="evidence" value="ECO:0007669"/>
    <property type="project" value="Ensembl"/>
</dbReference>
<dbReference type="GO" id="GO:2001240">
    <property type="term" value="P:negative regulation of extrinsic apoptotic signaling pathway in absence of ligand"/>
    <property type="evidence" value="ECO:0007669"/>
    <property type="project" value="Ensembl"/>
</dbReference>
<dbReference type="GO" id="GO:0030903">
    <property type="term" value="P:notochord development"/>
    <property type="evidence" value="ECO:0007669"/>
    <property type="project" value="Ensembl"/>
</dbReference>
<dbReference type="GO" id="GO:0071599">
    <property type="term" value="P:otic vesicle development"/>
    <property type="evidence" value="ECO:0007669"/>
    <property type="project" value="Ensembl"/>
</dbReference>
<dbReference type="GO" id="GO:0006029">
    <property type="term" value="P:proteoglycan metabolic process"/>
    <property type="evidence" value="ECO:0007669"/>
    <property type="project" value="Ensembl"/>
</dbReference>
<dbReference type="GO" id="GO:0010468">
    <property type="term" value="P:regulation of gene expression"/>
    <property type="evidence" value="ECO:0007669"/>
    <property type="project" value="Ensembl"/>
</dbReference>
<dbReference type="GO" id="GO:0060021">
    <property type="term" value="P:roof of mouth development"/>
    <property type="evidence" value="ECO:0007669"/>
    <property type="project" value="Ensembl"/>
</dbReference>
<dbReference type="GO" id="GO:0007605">
    <property type="term" value="P:sensory perception of sound"/>
    <property type="evidence" value="ECO:0000315"/>
    <property type="project" value="BHF-UCL"/>
</dbReference>
<dbReference type="GO" id="GO:0001501">
    <property type="term" value="P:skeletal system development"/>
    <property type="evidence" value="ECO:0000315"/>
    <property type="project" value="BHF-UCL"/>
</dbReference>
<dbReference type="GO" id="GO:0001894">
    <property type="term" value="P:tissue homeostasis"/>
    <property type="evidence" value="ECO:0007669"/>
    <property type="project" value="Ensembl"/>
</dbReference>
<dbReference type="GO" id="GO:0007601">
    <property type="term" value="P:visual perception"/>
    <property type="evidence" value="ECO:0000315"/>
    <property type="project" value="UniProtKB"/>
</dbReference>
<dbReference type="FunFam" id="2.60.120.1000:FF:000001">
    <property type="entry name" value="Collagen alpha-1 type I chain"/>
    <property type="match status" value="1"/>
</dbReference>
<dbReference type="FunFam" id="2.10.70.10:FF:000013">
    <property type="entry name" value="Collagen, type I, alpha 1"/>
    <property type="match status" value="1"/>
</dbReference>
<dbReference type="Gene3D" id="2.60.120.1000">
    <property type="match status" value="1"/>
</dbReference>
<dbReference type="Gene3D" id="2.10.70.10">
    <property type="entry name" value="Complement Module, domain 1"/>
    <property type="match status" value="1"/>
</dbReference>
<dbReference type="InterPro" id="IPR008160">
    <property type="entry name" value="Collagen"/>
</dbReference>
<dbReference type="InterPro" id="IPR050149">
    <property type="entry name" value="Collagen_superfamily"/>
</dbReference>
<dbReference type="InterPro" id="IPR000885">
    <property type="entry name" value="Fib_collagen_C"/>
</dbReference>
<dbReference type="InterPro" id="IPR001007">
    <property type="entry name" value="VWF_dom"/>
</dbReference>
<dbReference type="PANTHER" id="PTHR24023">
    <property type="entry name" value="COLLAGEN ALPHA"/>
    <property type="match status" value="1"/>
</dbReference>
<dbReference type="PANTHER" id="PTHR24023:SF1082">
    <property type="entry name" value="COLLAGEN TRIPLE HELIX REPEAT"/>
    <property type="match status" value="1"/>
</dbReference>
<dbReference type="Pfam" id="PF01410">
    <property type="entry name" value="COLFI"/>
    <property type="match status" value="1"/>
</dbReference>
<dbReference type="Pfam" id="PF01391">
    <property type="entry name" value="Collagen"/>
    <property type="match status" value="7"/>
</dbReference>
<dbReference type="Pfam" id="PF00093">
    <property type="entry name" value="VWC"/>
    <property type="match status" value="1"/>
</dbReference>
<dbReference type="SMART" id="SM00038">
    <property type="entry name" value="COLFI"/>
    <property type="match status" value="1"/>
</dbReference>
<dbReference type="SMART" id="SM00214">
    <property type="entry name" value="VWC"/>
    <property type="match status" value="1"/>
</dbReference>
<dbReference type="SUPFAM" id="SSF57603">
    <property type="entry name" value="FnI-like domain"/>
    <property type="match status" value="1"/>
</dbReference>
<dbReference type="PROSITE" id="PS51461">
    <property type="entry name" value="NC1_FIB"/>
    <property type="match status" value="1"/>
</dbReference>
<dbReference type="PROSITE" id="PS01208">
    <property type="entry name" value="VWFC_1"/>
    <property type="match status" value="1"/>
</dbReference>
<dbReference type="PROSITE" id="PS50184">
    <property type="entry name" value="VWFC_2"/>
    <property type="match status" value="1"/>
</dbReference>